<protein>
    <recommendedName>
        <fullName evidence="32">Polycomb protein EED</fullName>
        <shortName>hEED</shortName>
    </recommendedName>
    <alternativeName>
        <fullName evidence="30">Embryonic ectoderm development protein</fullName>
    </alternativeName>
    <alternativeName>
        <fullName>WD protein associating with integrin cytoplasmic tails 1</fullName>
        <shortName>WAIT-1</shortName>
    </alternativeName>
</protein>
<reference key="1">
    <citation type="journal article" date="1998" name="Genomics">
        <title>The murine Polycomb-group gene eed and its human orthologue: functional implications of evolutionary conservation.</title>
        <authorList>
            <person name="Schumacher A."/>
            <person name="Lichtarge O."/>
            <person name="Schwartz S."/>
            <person name="Magnuson T."/>
        </authorList>
    </citation>
    <scope>NUCLEOTIDE SEQUENCE [MRNA] (ISOFORM 1)</scope>
    <scope>TISSUE SPECIFICITY</scope>
    <source>
        <tissue>Brain</tissue>
    </source>
</reference>
<reference key="2">
    <citation type="journal article" date="1998" name="Mol. Cell. Biol.">
        <title>Characterization of interactions between the mammalian polycomb-group proteins Enx1/EZH2 and EED suggests the existence of different mammalian polycomb-group protein complexes.</title>
        <authorList>
            <person name="Sewalt R.G.A.B."/>
            <person name="van der Vlag J."/>
            <person name="Gunster M.J."/>
            <person name="Hamer K.M."/>
            <person name="den Blaauwen J.L."/>
            <person name="Satijn D.P.E."/>
            <person name="Hendrix T."/>
            <person name="van Driel R."/>
            <person name="Otte A.P."/>
        </authorList>
    </citation>
    <scope>NUCLEOTIDE SEQUENCE [MRNA] (ISOFORM 1)</scope>
    <scope>FUNCTION</scope>
    <scope>INTERACTION WITH EZH2</scope>
    <scope>SUBCELLULAR LOCATION</scope>
    <scope>TISSUE SPECIFICITY</scope>
    <scope>MUTAGENESIS OF ILE-193 AND LEU-196</scope>
    <scope>PUTATIVE ALTERNATIVE INITIATION</scope>
</reference>
<reference key="3">
    <citation type="journal article" date="1999" name="J. Biol. Chem.">
        <title>HEED, the product of the human homolog of the murine eed gene, binds to the matrix protein of HIV-1.</title>
        <authorList>
            <person name="Peytavi R."/>
            <person name="Hong S.S."/>
            <person name="Gay B."/>
            <person name="d'Angeac A.D."/>
            <person name="Selig L."/>
            <person name="Benichou S."/>
            <person name="Benarous R."/>
            <person name="Boulanger P."/>
        </authorList>
    </citation>
    <scope>NUCLEOTIDE SEQUENCE [MRNA] (ISOFORMS 1 AND 3)</scope>
    <scope>INTERACTION WITH THE HIV-1 MA PROTEIN</scope>
    <scope>SUBCELLULAR LOCATION</scope>
    <scope>TISSUE SPECIFICITY</scope>
    <scope>MUTAGENESIS OF 300-SER-THR-301 AND 305-HIS-TYR-308</scope>
    <source>
        <tissue>Spleen</tissue>
    </source>
</reference>
<reference key="4">
    <citation type="journal article" date="2004" name="Nat. Genet.">
        <title>Complete sequencing and characterization of 21,243 full-length human cDNAs.</title>
        <authorList>
            <person name="Ota T."/>
            <person name="Suzuki Y."/>
            <person name="Nishikawa T."/>
            <person name="Otsuki T."/>
            <person name="Sugiyama T."/>
            <person name="Irie R."/>
            <person name="Wakamatsu A."/>
            <person name="Hayashi K."/>
            <person name="Sato H."/>
            <person name="Nagai K."/>
            <person name="Kimura K."/>
            <person name="Makita H."/>
            <person name="Sekine M."/>
            <person name="Obayashi M."/>
            <person name="Nishi T."/>
            <person name="Shibahara T."/>
            <person name="Tanaka T."/>
            <person name="Ishii S."/>
            <person name="Yamamoto J."/>
            <person name="Saito K."/>
            <person name="Kawai Y."/>
            <person name="Isono Y."/>
            <person name="Nakamura Y."/>
            <person name="Nagahari K."/>
            <person name="Murakami K."/>
            <person name="Yasuda T."/>
            <person name="Iwayanagi T."/>
            <person name="Wagatsuma M."/>
            <person name="Shiratori A."/>
            <person name="Sudo H."/>
            <person name="Hosoiri T."/>
            <person name="Kaku Y."/>
            <person name="Kodaira H."/>
            <person name="Kondo H."/>
            <person name="Sugawara M."/>
            <person name="Takahashi M."/>
            <person name="Kanda K."/>
            <person name="Yokoi T."/>
            <person name="Furuya T."/>
            <person name="Kikkawa E."/>
            <person name="Omura Y."/>
            <person name="Abe K."/>
            <person name="Kamihara K."/>
            <person name="Katsuta N."/>
            <person name="Sato K."/>
            <person name="Tanikawa M."/>
            <person name="Yamazaki M."/>
            <person name="Ninomiya K."/>
            <person name="Ishibashi T."/>
            <person name="Yamashita H."/>
            <person name="Murakawa K."/>
            <person name="Fujimori K."/>
            <person name="Tanai H."/>
            <person name="Kimata M."/>
            <person name="Watanabe M."/>
            <person name="Hiraoka S."/>
            <person name="Chiba Y."/>
            <person name="Ishida S."/>
            <person name="Ono Y."/>
            <person name="Takiguchi S."/>
            <person name="Watanabe S."/>
            <person name="Yosida M."/>
            <person name="Hotuta T."/>
            <person name="Kusano J."/>
            <person name="Kanehori K."/>
            <person name="Takahashi-Fujii A."/>
            <person name="Hara H."/>
            <person name="Tanase T.-O."/>
            <person name="Nomura Y."/>
            <person name="Togiya S."/>
            <person name="Komai F."/>
            <person name="Hara R."/>
            <person name="Takeuchi K."/>
            <person name="Arita M."/>
            <person name="Imose N."/>
            <person name="Musashino K."/>
            <person name="Yuuki H."/>
            <person name="Oshima A."/>
            <person name="Sasaki N."/>
            <person name="Aotsuka S."/>
            <person name="Yoshikawa Y."/>
            <person name="Matsunawa H."/>
            <person name="Ichihara T."/>
            <person name="Shiohata N."/>
            <person name="Sano S."/>
            <person name="Moriya S."/>
            <person name="Momiyama H."/>
            <person name="Satoh N."/>
            <person name="Takami S."/>
            <person name="Terashima Y."/>
            <person name="Suzuki O."/>
            <person name="Nakagawa S."/>
            <person name="Senoh A."/>
            <person name="Mizoguchi H."/>
            <person name="Goto Y."/>
            <person name="Shimizu F."/>
            <person name="Wakebe H."/>
            <person name="Hishigaki H."/>
            <person name="Watanabe T."/>
            <person name="Sugiyama A."/>
            <person name="Takemoto M."/>
            <person name="Kawakami B."/>
            <person name="Yamazaki M."/>
            <person name="Watanabe K."/>
            <person name="Kumagai A."/>
            <person name="Itakura S."/>
            <person name="Fukuzumi Y."/>
            <person name="Fujimori Y."/>
            <person name="Komiyama M."/>
            <person name="Tashiro H."/>
            <person name="Tanigami A."/>
            <person name="Fujiwara T."/>
            <person name="Ono T."/>
            <person name="Yamada K."/>
            <person name="Fujii Y."/>
            <person name="Ozaki K."/>
            <person name="Hirao M."/>
            <person name="Ohmori Y."/>
            <person name="Kawabata A."/>
            <person name="Hikiji T."/>
            <person name="Kobatake N."/>
            <person name="Inagaki H."/>
            <person name="Ikema Y."/>
            <person name="Okamoto S."/>
            <person name="Okitani R."/>
            <person name="Kawakami T."/>
            <person name="Noguchi S."/>
            <person name="Itoh T."/>
            <person name="Shigeta K."/>
            <person name="Senba T."/>
            <person name="Matsumura K."/>
            <person name="Nakajima Y."/>
            <person name="Mizuno T."/>
            <person name="Morinaga M."/>
            <person name="Sasaki M."/>
            <person name="Togashi T."/>
            <person name="Oyama M."/>
            <person name="Hata H."/>
            <person name="Watanabe M."/>
            <person name="Komatsu T."/>
            <person name="Mizushima-Sugano J."/>
            <person name="Satoh T."/>
            <person name="Shirai Y."/>
            <person name="Takahashi Y."/>
            <person name="Nakagawa K."/>
            <person name="Okumura K."/>
            <person name="Nagase T."/>
            <person name="Nomura N."/>
            <person name="Kikuchi H."/>
            <person name="Masuho Y."/>
            <person name="Yamashita R."/>
            <person name="Nakai K."/>
            <person name="Yada T."/>
            <person name="Nakamura Y."/>
            <person name="Ohara O."/>
            <person name="Isogai T."/>
            <person name="Sugano S."/>
        </authorList>
    </citation>
    <scope>NUCLEOTIDE SEQUENCE [LARGE SCALE MRNA] (ISOFORM 1)</scope>
    <source>
        <tissue>Synovium</tissue>
    </source>
</reference>
<reference key="5">
    <citation type="journal article" date="2006" name="Nature">
        <title>Human chromosome 11 DNA sequence and analysis including novel gene identification.</title>
        <authorList>
            <person name="Taylor T.D."/>
            <person name="Noguchi H."/>
            <person name="Totoki Y."/>
            <person name="Toyoda A."/>
            <person name="Kuroki Y."/>
            <person name="Dewar K."/>
            <person name="Lloyd C."/>
            <person name="Itoh T."/>
            <person name="Takeda T."/>
            <person name="Kim D.-W."/>
            <person name="She X."/>
            <person name="Barlow K.F."/>
            <person name="Bloom T."/>
            <person name="Bruford E."/>
            <person name="Chang J.L."/>
            <person name="Cuomo C.A."/>
            <person name="Eichler E."/>
            <person name="FitzGerald M.G."/>
            <person name="Jaffe D.B."/>
            <person name="LaButti K."/>
            <person name="Nicol R."/>
            <person name="Park H.-S."/>
            <person name="Seaman C."/>
            <person name="Sougnez C."/>
            <person name="Yang X."/>
            <person name="Zimmer A.R."/>
            <person name="Zody M.C."/>
            <person name="Birren B.W."/>
            <person name="Nusbaum C."/>
            <person name="Fujiyama A."/>
            <person name="Hattori M."/>
            <person name="Rogers J."/>
            <person name="Lander E.S."/>
            <person name="Sakaki Y."/>
        </authorList>
    </citation>
    <scope>NUCLEOTIDE SEQUENCE [LARGE SCALE GENOMIC DNA]</scope>
</reference>
<reference key="6">
    <citation type="submission" date="2005-07" db="EMBL/GenBank/DDBJ databases">
        <authorList>
            <person name="Mural R.J."/>
            <person name="Istrail S."/>
            <person name="Sutton G.G."/>
            <person name="Florea L."/>
            <person name="Halpern A.L."/>
            <person name="Mobarry C.M."/>
            <person name="Lippert R."/>
            <person name="Walenz B."/>
            <person name="Shatkay H."/>
            <person name="Dew I."/>
            <person name="Miller J.R."/>
            <person name="Flanigan M.J."/>
            <person name="Edwards N.J."/>
            <person name="Bolanos R."/>
            <person name="Fasulo D."/>
            <person name="Halldorsson B.V."/>
            <person name="Hannenhalli S."/>
            <person name="Turner R."/>
            <person name="Yooseph S."/>
            <person name="Lu F."/>
            <person name="Nusskern D.R."/>
            <person name="Shue B.C."/>
            <person name="Zheng X.H."/>
            <person name="Zhong F."/>
            <person name="Delcher A.L."/>
            <person name="Huson D.H."/>
            <person name="Kravitz S.A."/>
            <person name="Mouchard L."/>
            <person name="Reinert K."/>
            <person name="Remington K.A."/>
            <person name="Clark A.G."/>
            <person name="Waterman M.S."/>
            <person name="Eichler E.E."/>
            <person name="Adams M.D."/>
            <person name="Hunkapiller M.W."/>
            <person name="Myers E.W."/>
            <person name="Venter J.C."/>
        </authorList>
    </citation>
    <scope>NUCLEOTIDE SEQUENCE [LARGE SCALE GENOMIC DNA]</scope>
</reference>
<reference key="7">
    <citation type="journal article" date="2004" name="Genome Res.">
        <title>The status, quality, and expansion of the NIH full-length cDNA project: the Mammalian Gene Collection (MGC).</title>
        <authorList>
            <consortium name="The MGC Project Team"/>
        </authorList>
    </citation>
    <scope>NUCLEOTIDE SEQUENCE [LARGE SCALE MRNA] (ISOFORM 2)</scope>
    <scope>NUCLEOTIDE SEQUENCE [LARGE SCALE MRNA] OF 15-441 (ISOFORM 1)</scope>
    <source>
        <tissue>Eye</tissue>
        <tissue>Lung</tissue>
    </source>
</reference>
<reference key="8">
    <citation type="journal article" date="1998" name="J. Biol. Chem.">
        <title>The human WD repeat protein WAIT-1 specifically interacts with the cytoplasmic tails of beta7-integrins.</title>
        <authorList>
            <person name="Rietzler M."/>
            <person name="Bittner M."/>
            <person name="Kolanus W."/>
            <person name="Schuster A."/>
            <person name="Holzmann B."/>
        </authorList>
    </citation>
    <scope>NUCLEOTIDE SEQUENCE [MRNA] OF 4-441 (ISOFORM 1)</scope>
    <scope>INTERACTION WITH ITGA4; ITGAE AND ITGB7</scope>
    <scope>TISSUE SPECIFICITY</scope>
</reference>
<reference key="9">
    <citation type="journal article" date="1999" name="Nat. Genet.">
        <title>Transcriptional repression mediated by the human polycomb-group protein EED involves histone deacetylation.</title>
        <authorList>
            <person name="van der Vlag J."/>
            <person name="Otte A.P."/>
        </authorList>
    </citation>
    <scope>FUNCTION</scope>
    <scope>INTERACTION WITH EZH2; HDAC1 AND HDAC2</scope>
</reference>
<reference key="10">
    <citation type="journal article" date="2001" name="Mol. Cell. Biol.">
        <title>The polycomb group protein EED interacts with YY1, and both proteins induce neural tissue in Xenopus embryos.</title>
        <authorList>
            <person name="Satijn D.P.E."/>
            <person name="Hamer K.M."/>
            <person name="den Blaauwen J."/>
            <person name="Otte A.P."/>
        </authorList>
    </citation>
    <scope>INTERACTION WITH EZH2 AND YY1</scope>
</reference>
<reference key="11">
    <citation type="journal article" date="2002" name="Genes Dev.">
        <title>Histone methyltransferase activity associated with a human multiprotein complex containing the Enhancer of Zeste protein.</title>
        <authorList>
            <person name="Kuzmichev A."/>
            <person name="Nishioka K."/>
            <person name="Erdjument-Bromage H."/>
            <person name="Tempst P."/>
            <person name="Reinberg D."/>
        </authorList>
    </citation>
    <scope>IDENTIFICATION BY MASS SPECTROMETRY</scope>
    <scope>IDENTIFICATION IN THE PRC2 COMPLEX WITH EZH2; RBBP4; RBBP7 AND SUZ12</scope>
    <scope>METHYLTRANSFERASE ACTIVITY OF THE PRC2 COMPLEX</scope>
</reference>
<reference key="12">
    <citation type="journal article" date="2002" name="Mol. Cell. Biol.">
        <title>Selective interactions between vertebrate polycomb homologs and the SUV39H1 histone lysine methyltransferase suggest that histone H3-K9 methylation contributes to chromosomal targeting of Polycomb group proteins.</title>
        <authorList>
            <person name="Sewalt R.G.A.B."/>
            <person name="Lachner M."/>
            <person name="Vargas M."/>
            <person name="Hamer K.M."/>
            <person name="den Blaauwen J.L."/>
            <person name="Hendrix T."/>
            <person name="Melcher M."/>
            <person name="Schweizer D."/>
            <person name="Jenuwein T."/>
            <person name="Otte A.P."/>
        </authorList>
    </citation>
    <scope>SUBCELLULAR LOCATION</scope>
</reference>
<reference key="13">
    <citation type="journal article" date="2002" name="Science">
        <title>Role of histone H3 lysine 27 methylation in Polycomb-group silencing.</title>
        <authorList>
            <person name="Cao R."/>
            <person name="Wang L."/>
            <person name="Wang H."/>
            <person name="Xia L."/>
            <person name="Erdjument-Bromage H."/>
            <person name="Tempst P."/>
            <person name="Jones R.S."/>
            <person name="Zhang Y."/>
        </authorList>
    </citation>
    <scope>IDENTIFICATION BY MASS SPECTROMETRY</scope>
    <scope>IDENTIFICATION IN THE PRC2 COMPLEX WITH EZH2; RBBP4; RBBP7 AND SUZ12</scope>
    <scope>METHYLTRANSFERASE ACTIVITY OF THE PRC2 COMPLEX</scope>
</reference>
<reference key="14">
    <citation type="journal article" date="2003" name="EMBO J.">
        <title>EZH2 is downstream of the pRB-E2F pathway, essential for proliferation and amplified in cancer.</title>
        <authorList>
            <person name="Bracken A.P."/>
            <person name="Pasini D."/>
            <person name="Capra M."/>
            <person name="Prosperini E."/>
            <person name="Colli E."/>
            <person name="Helin K."/>
        </authorList>
    </citation>
    <scope>FUNCTION</scope>
    <scope>DEVELOPMENTAL STAGE</scope>
    <scope>INDUCTION</scope>
</reference>
<reference key="15">
    <citation type="journal article" date="2003" name="Science">
        <title>Role of histone H3 lysine 27 methylation in X inactivation.</title>
        <authorList>
            <person name="Plath K."/>
            <person name="Fang J."/>
            <person name="Mlynarczyk-Evans S.K."/>
            <person name="Cao R."/>
            <person name="Worringer K.A."/>
            <person name="Wang H."/>
            <person name="de la Cruz C.C."/>
            <person name="Otte A.P."/>
            <person name="Panning B."/>
            <person name="Zhang Y."/>
        </authorList>
    </citation>
    <scope>SUBCELLULAR LOCATION</scope>
</reference>
<reference key="16">
    <citation type="journal article" date="2004" name="EMBO J.">
        <title>Suz12 is essential for mouse development and for EZH2 histone methyltransferase activity.</title>
        <authorList>
            <person name="Pasini D."/>
            <person name="Bracken A.P."/>
            <person name="Jensen M.R."/>
            <person name="Lazzerini Denchi E."/>
            <person name="Helin K."/>
        </authorList>
    </citation>
    <scope>FUNCTION</scope>
    <scope>INTERACTION WITH EZH2</scope>
    <scope>METHYLTRANSFERASE ACTIVITY OF THE PRC2 COMPLEX</scope>
</reference>
<reference key="17">
    <citation type="journal article" date="2004" name="Genes Dev.">
        <title>Silencing of human polycomb target genes is associated with methylation of histone H3 Lys 27.</title>
        <authorList>
            <person name="Kirmizis A."/>
            <person name="Bartley S.M."/>
            <person name="Kuzmichev A."/>
            <person name="Margueron R."/>
            <person name="Reinberg D."/>
            <person name="Green R."/>
            <person name="Farnham P.J."/>
        </authorList>
    </citation>
    <scope>FUNCTION</scope>
    <scope>SUBCELLULAR LOCATION</scope>
</reference>
<reference key="18">
    <citation type="journal article" date="2004" name="Mol. Cell">
        <title>Different EZH2-containing complexes target methylation of histone H1 or nucleosomal histone H3.</title>
        <authorList>
            <person name="Kuzmichev A."/>
            <person name="Jenuwein T."/>
            <person name="Tempst P."/>
            <person name="Reinberg D."/>
        </authorList>
    </citation>
    <scope>CHARACTERIZATION OF THE PRC2 AND PRC3 COMPLEXES INCLUDING EED; EZH2; RBBP4; RBBP7 AND SUZ12</scope>
    <scope>METHYLTRANSFERASE ACTIVITY OF THE PRC2 AND PRC3 COMPLEXES</scope>
    <scope>PUTATIVE ALTERNATIVE INITIATION</scope>
</reference>
<reference key="19">
    <citation type="journal article" date="2004" name="Mol. Cell">
        <title>SUZ12 is required for both the histone methyltransferase activity and the silencing function of the EED-EZH2 complex.</title>
        <authorList>
            <person name="Cao R."/>
            <person name="Zhang Y."/>
        </authorList>
    </citation>
    <scope>FUNCTION</scope>
    <scope>CHARACTERIZATION OF THE PRC2 COMPLEX INCLUDING AEBP2; EED; EZH2; RBBP4 AND SUZ12</scope>
    <scope>METHYLTRANSFERASE ACTIVITY OF THE PRC2 COMPLEX</scope>
</reference>
<reference key="20">
    <citation type="journal article" date="2005" name="Proc. Natl. Acad. Sci. U.S.A.">
        <title>Composition and histone substrates of polycomb repressive group complexes change during cellular differentiation.</title>
        <authorList>
            <person name="Kuzmichev A."/>
            <person name="Margueron R."/>
            <person name="Vaquero A."/>
            <person name="Preissner T.S."/>
            <person name="Scher M."/>
            <person name="Kirmizis A."/>
            <person name="Ouyang X."/>
            <person name="Brockdorff N."/>
            <person name="Abate-Shen C."/>
            <person name="Farnham P.J."/>
            <person name="Reinberg D."/>
        </authorList>
    </citation>
    <scope>CHARACTERIZATION OF THE PRC4 COMPLEX INCLUDING EED; EZH2; RBBP4; RBBP7; SUZ12 AND SIRT1</scope>
    <scope>METHYLTRANSFERASE ACTIVITY OF THE PRC4 COMPLEX</scope>
    <scope>TISSUE SPECIFICITY</scope>
</reference>
<reference key="21">
    <citation type="journal article" date="2006" name="J. Biol. Chem.">
        <title>Substrate preferences of the EZH2 histone methyltransferase complex.</title>
        <authorList>
            <person name="Martin C."/>
            <person name="Cao R."/>
            <person name="Zhang Y."/>
        </authorList>
    </citation>
    <scope>METHYLTRANSFERASE ACTIVITY OF THE PRC2 COMPLEX</scope>
    <scope>INTERACTION WITH HISTONE H1</scope>
</reference>
<reference key="22">
    <citation type="journal article" date="2006" name="Nature">
        <title>The Polycomb group protein EZH2 directly controls DNA methylation.</title>
        <authorList>
            <person name="Vire E."/>
            <person name="Brenner C."/>
            <person name="Deplus R."/>
            <person name="Blanchon L."/>
            <person name="Fraga M."/>
            <person name="Didelot C."/>
            <person name="Morey L."/>
            <person name="Van Eynde A."/>
            <person name="Bernard D."/>
            <person name="Vanderwinden J.-M."/>
            <person name="Bollen M."/>
            <person name="Esteller M."/>
            <person name="Di Croce L."/>
            <person name="de Launoit Y."/>
            <person name="Fuks F."/>
        </authorList>
    </citation>
    <scope>FUNCTION</scope>
    <scope>INTERACTION OF THE PRC2 COMPLEX WITH DNMT1; DNMT3A AND DNMT3B</scope>
</reference>
<reference key="23">
    <citation type="journal article" date="2007" name="Nature">
        <authorList>
            <person name="Vire E."/>
            <person name="Brenner C."/>
            <person name="Deplus R."/>
            <person name="Blanchon L."/>
            <person name="Fraga M."/>
            <person name="Didelot C."/>
            <person name="Morey L."/>
            <person name="Van Eynde A."/>
            <person name="Bernard D."/>
            <person name="Vanderwinden J.-M."/>
            <person name="Bollen M."/>
            <person name="Esteller M."/>
            <person name="Di Croce L."/>
            <person name="de Launoit Y."/>
            <person name="Fuks F."/>
        </authorList>
    </citation>
    <scope>ERRATUM OF PUBMED:16357870</scope>
</reference>
<reference key="24">
    <citation type="journal article" date="2007" name="Nat. Genet.">
        <title>Polycomb-mediated methylation on Lys27 of histone H3 pre-marks genes for de novo methylation in cancer.</title>
        <authorList>
            <person name="Schlesinger Y."/>
            <person name="Straussman R."/>
            <person name="Keshet I."/>
            <person name="Farkash S."/>
            <person name="Hecht M."/>
            <person name="Zimmerman J."/>
            <person name="Eden E."/>
            <person name="Yakhini Z."/>
            <person name="Ben-Shushan E."/>
            <person name="Reubinoff B.E."/>
            <person name="Bergman Y."/>
            <person name="Simon I."/>
            <person name="Cedar H."/>
        </authorList>
    </citation>
    <scope>DE NOVO DNA METHYLATION OF PRC2 TARGET GENES</scope>
</reference>
<reference key="25">
    <citation type="journal article" date="2008" name="Mol. Cell">
        <title>Ezh1 and Ezh2 maintain repressive chromatin through different mechanisms.</title>
        <authorList>
            <person name="Margueron R."/>
            <person name="Li G."/>
            <person name="Sarma K."/>
            <person name="Blais A."/>
            <person name="Zavadil J."/>
            <person name="Woodcock C.L."/>
            <person name="Dynlacht B.D."/>
            <person name="Reinberg D."/>
        </authorList>
    </citation>
    <scope>IDENTIFICATION IN THE PRC2/EED-EZH1 COMPLEX</scope>
</reference>
<reference key="26">
    <citation type="journal article" date="2008" name="Mol. Cell. Biol.">
        <title>Role of hPHF1 in H3K27 methylation and Hox gene silencing.</title>
        <authorList>
            <person name="Cao R."/>
            <person name="Wang H."/>
            <person name="He J."/>
            <person name="Erdjument-Bromage H."/>
            <person name="Tempst P."/>
            <person name="Zhang Y."/>
        </authorList>
    </citation>
    <scope>IDENTIFICATION BY MASS SPECTROMETRY</scope>
    <scope>INTERACTION OF THE PRC2 COMPLEX WITH PHF1</scope>
    <scope>METHYLTRANSFERASE ACTIVITY OF THE PRC2 COMPLEX</scope>
</reference>
<reference key="27">
    <citation type="journal article" date="2008" name="Mol. Cell. Biol.">
        <title>Ezh2 requires PHF1 to efficiently catalyze H3 lysine 27 trimethylation in vivo.</title>
        <authorList>
            <person name="Sarma K."/>
            <person name="Margueron R."/>
            <person name="Ivanov A."/>
            <person name="Pirrotta V."/>
            <person name="Reinberg D."/>
        </authorList>
    </citation>
    <scope>FUNCTION</scope>
    <scope>INTERACTION WITH EZH2 AND SUZ12</scope>
    <scope>INTERACTION OF THE PRC2 COMPLEX WITH PHF1</scope>
    <scope>METHYLTRANSFERASE ACTIVITY OF THE PRC2 COMPLEX</scope>
</reference>
<reference key="28">
    <citation type="journal article" date="2008" name="Proc. Natl. Acad. Sci. U.S.A.">
        <title>A quantitative atlas of mitotic phosphorylation.</title>
        <authorList>
            <person name="Dephoure N."/>
            <person name="Zhou C."/>
            <person name="Villen J."/>
            <person name="Beausoleil S.A."/>
            <person name="Bakalarski C.E."/>
            <person name="Elledge S.J."/>
            <person name="Gygi S.P."/>
        </authorList>
    </citation>
    <scope>PHOSPHORYLATION [LARGE SCALE ANALYSIS] AT THR-55</scope>
    <scope>IDENTIFICATION BY MASS SPECTROMETRY [LARGE SCALE ANALYSIS]</scope>
    <source>
        <tissue>Cervix carcinoma</tissue>
    </source>
</reference>
<reference key="29">
    <citation type="journal article" date="2009" name="Anal. Chem.">
        <title>Lys-N and trypsin cover complementary parts of the phosphoproteome in a refined SCX-based approach.</title>
        <authorList>
            <person name="Gauci S."/>
            <person name="Helbig A.O."/>
            <person name="Slijper M."/>
            <person name="Krijgsveld J."/>
            <person name="Heck A.J."/>
            <person name="Mohammed S."/>
        </authorList>
    </citation>
    <scope>ACETYLATION [LARGE SCALE ANALYSIS] AT SER-2</scope>
    <scope>CLEAVAGE OF INITIATOR METHIONINE [LARGE SCALE ANALYSIS]</scope>
    <scope>IDENTIFICATION BY MASS SPECTROMETRY [LARGE SCALE ANALYSIS]</scope>
</reference>
<reference key="30">
    <citation type="journal article" date="2011" name="J. Biol. Chem.">
        <title>Corepressor protein CDYL functions as a molecular bridge between polycomb repressor complex 2 and repressive chromatin mark trimethylated histone lysine 27.</title>
        <authorList>
            <person name="Zhang Y."/>
            <person name="Yang X."/>
            <person name="Gui B."/>
            <person name="Xie G."/>
            <person name="Zhang D."/>
            <person name="Shang Y."/>
            <person name="Liang J."/>
        </authorList>
    </citation>
    <scope>INTERACTION WITH CDYL</scope>
</reference>
<reference key="31">
    <citation type="journal article" date="2011" name="Sci. Signal.">
        <title>System-wide temporal characterization of the proteome and phosphoproteome of human embryonic stem cell differentiation.</title>
        <authorList>
            <person name="Rigbolt K.T."/>
            <person name="Prokhorova T.A."/>
            <person name="Akimov V."/>
            <person name="Henningsen J."/>
            <person name="Johansen P.T."/>
            <person name="Kratchmarova I."/>
            <person name="Kassem M."/>
            <person name="Mann M."/>
            <person name="Olsen J.V."/>
            <person name="Blagoev B."/>
        </authorList>
    </citation>
    <scope>IDENTIFICATION BY MASS SPECTROMETRY [LARGE SCALE ANALYSIS]</scope>
</reference>
<reference key="32">
    <citation type="journal article" date="2013" name="J. Proteome Res.">
        <title>Toward a comprehensive characterization of a human cancer cell phosphoproteome.</title>
        <authorList>
            <person name="Zhou H."/>
            <person name="Di Palma S."/>
            <person name="Preisinger C."/>
            <person name="Peng M."/>
            <person name="Polat A.N."/>
            <person name="Heck A.J."/>
            <person name="Mohammed S."/>
        </authorList>
    </citation>
    <scope>PHOSPHORYLATION [LARGE SCALE ANALYSIS] AT SER-2</scope>
    <scope>IDENTIFICATION BY MASS SPECTROMETRY [LARGE SCALE ANALYSIS]</scope>
    <source>
        <tissue>Erythroleukemia</tissue>
    </source>
</reference>
<reference key="33">
    <citation type="journal article" date="2014" name="J. Proteomics">
        <title>An enzyme assisted RP-RPLC approach for in-depth analysis of human liver phosphoproteome.</title>
        <authorList>
            <person name="Bian Y."/>
            <person name="Song C."/>
            <person name="Cheng K."/>
            <person name="Dong M."/>
            <person name="Wang F."/>
            <person name="Huang J."/>
            <person name="Sun D."/>
            <person name="Wang L."/>
            <person name="Ye M."/>
            <person name="Zou H."/>
        </authorList>
    </citation>
    <scope>IDENTIFICATION BY MASS SPECTROMETRY [LARGE SCALE ANALYSIS]</scope>
    <source>
        <tissue>Liver</tissue>
    </source>
</reference>
<reference key="34">
    <citation type="journal article" date="2010" name="Proc. Natl. Acad. Sci. U.S.A.">
        <title>Binding of different histone marks differentially regulates the activity and specificity of polycomb repressive complex 2 (PRC2).</title>
        <authorList>
            <person name="Xu C."/>
            <person name="Bian C."/>
            <person name="Yang W."/>
            <person name="Galka M."/>
            <person name="Ouyang H."/>
            <person name="Chen C."/>
            <person name="Qiu W."/>
            <person name="Liu H."/>
            <person name="Jones A.E."/>
            <person name="MacKenzie F."/>
            <person name="Pan P."/>
            <person name="Li S.S."/>
            <person name="Wang H."/>
            <person name="Min J."/>
        </authorList>
    </citation>
    <scope>X-RAY CRYSTALLOGRAPHY (2.05 ANGSTROMS) OF 40-441 ALONE AND IN COMPLEX WITH METHYLATED HISTONE PEPTIDES</scope>
    <scope>FUNCTION</scope>
    <scope>DOMAIN WD REPEATS</scope>
    <scope>METHYLATION AT LYS-66; LYS-197; LYS-268 AND LYS-284</scope>
    <scope>MUTAGENESIS OF PHE-97; TYR-148; TRP-364 AND TYR-365</scope>
</reference>
<reference key="35">
    <citation type="journal article" date="2015" name="J. Hum. Genet.">
        <title>A novel mutation in EED associated with overgrowth.</title>
        <authorList>
            <person name="Cohen A.S."/>
            <person name="Tuysuz B."/>
            <person name="Shen Y."/>
            <person name="Bhalla S.K."/>
            <person name="Jones S.J."/>
            <person name="Gibson W.T."/>
        </authorList>
    </citation>
    <scope>INVOLVEMENT IN COGIS</scope>
    <scope>VARIANT COGIS SER-302</scope>
</reference>
<reference key="36">
    <citation type="journal article" date="2016" name="J. Hum. Genet.">
        <title>EED-associated overgrowth in a second male patient.</title>
        <authorList>
            <person name="Cohen A.S."/>
            <person name="Gibson W.T."/>
        </authorList>
    </citation>
    <scope>VARIANT COGIS TYR-258</scope>
</reference>
<reference key="37">
    <citation type="journal article" date="2017" name="Am. J. Hum. Genet.">
        <title>Mutations in epigenetic regulation genes are a major cause of overgrowth with intellectual disability.</title>
        <authorList>
            <consortium name="Childhood Overgrowth Collaboration"/>
            <person name="Tatton-Brown K."/>
            <person name="Loveday C."/>
            <person name="Yost S."/>
            <person name="Clarke M."/>
            <person name="Ramsay E."/>
            <person name="Zachariou A."/>
            <person name="Elliott A."/>
            <person name="Wylie H."/>
            <person name="Ardissone A."/>
            <person name="Rittinger O."/>
            <person name="Stewart F."/>
            <person name="Temple I.K."/>
            <person name="Cole T."/>
            <person name="Mahamdallie S."/>
            <person name="Seal S."/>
            <person name="Ruark E."/>
            <person name="Rahman N."/>
        </authorList>
    </citation>
    <scope>VARIANTS COGIS SER-194 AND GLY-236</scope>
</reference>
<reference key="38">
    <citation type="journal article" date="2017" name="Am. J. Med. Genet. A">
        <title>Novel EED mutation in patient with Weaver syndrome.</title>
        <authorList>
            <person name="Cooney E."/>
            <person name="Bi W."/>
            <person name="Schlesinger A.E."/>
            <person name="Vinson S."/>
            <person name="Potocki L."/>
        </authorList>
    </citation>
    <scope>VARIANT COGIS GLY-302</scope>
</reference>
<reference key="39">
    <citation type="journal article" date="2017" name="Hum. Mutat.">
        <title>Mutations in genes encoding polycomb repressive complex 2 subunits cause Weaver syndrome.</title>
        <authorList>
            <person name="Imagawa E."/>
            <person name="Higashimoto K."/>
            <person name="Sakai Y."/>
            <person name="Numakura C."/>
            <person name="Okamoto N."/>
            <person name="Matsunaga S."/>
            <person name="Ryo A."/>
            <person name="Sato Y."/>
            <person name="Sanefuji M."/>
            <person name="Ihara K."/>
            <person name="Takada Y."/>
            <person name="Nishimura G."/>
            <person name="Saitsu H."/>
            <person name="Mizuguchi T."/>
            <person name="Miyatake S."/>
            <person name="Nakashima M."/>
            <person name="Miyake N."/>
            <person name="Soejima H."/>
            <person name="Matsumoto N."/>
        </authorList>
    </citation>
    <scope>VARIANT COGIS THR-236</scope>
    <scope>CHARACTERIZATION OF VARIANTS COGIS THR-236 AND SER-302</scope>
    <scope>FUNCTION</scope>
</reference>
<accession>O75530</accession>
<accession>A8K7V5</accession>
<accession>O00149</accession>
<accession>Q6NTH2</accession>
<accession>Q7LDA5</accession>
<accession>Q7LDG8</accession>
<accession>Q86VV2</accession>
<accession>Q9UNY7</accession>
<gene>
    <name evidence="34" type="primary">EED</name>
</gene>
<dbReference type="EMBL" id="AF080227">
    <property type="protein sequence ID" value="AAC95144.1"/>
    <property type="molecule type" value="mRNA"/>
</dbReference>
<dbReference type="EMBL" id="AF070418">
    <property type="protein sequence ID" value="AAC23685.1"/>
    <property type="status" value="ALT_INIT"/>
    <property type="molecule type" value="mRNA"/>
</dbReference>
<dbReference type="EMBL" id="U90651">
    <property type="protein sequence ID" value="AAD08714.1"/>
    <property type="molecule type" value="mRNA"/>
</dbReference>
<dbReference type="EMBL" id="AF099032">
    <property type="protein sequence ID" value="AAD08815.1"/>
    <property type="molecule type" value="mRNA"/>
</dbReference>
<dbReference type="EMBL" id="AK292120">
    <property type="protein sequence ID" value="BAF84809.1"/>
    <property type="molecule type" value="mRNA"/>
</dbReference>
<dbReference type="EMBL" id="AP003084">
    <property type="status" value="NOT_ANNOTATED_CDS"/>
    <property type="molecule type" value="Genomic_DNA"/>
</dbReference>
<dbReference type="EMBL" id="CH471076">
    <property type="protein sequence ID" value="EAW75129.1"/>
    <property type="molecule type" value="Genomic_DNA"/>
</dbReference>
<dbReference type="EMBL" id="CH471076">
    <property type="protein sequence ID" value="EAW75130.1"/>
    <property type="molecule type" value="Genomic_DNA"/>
</dbReference>
<dbReference type="EMBL" id="BC047672">
    <property type="protein sequence ID" value="AAH47672.1"/>
    <property type="molecule type" value="mRNA"/>
</dbReference>
<dbReference type="EMBL" id="BC068995">
    <property type="protein sequence ID" value="AAH68995.1"/>
    <property type="molecule type" value="mRNA"/>
</dbReference>
<dbReference type="EMBL" id="AF078933">
    <property type="protein sequence ID" value="AAC68675.1"/>
    <property type="status" value="ALT_INIT"/>
    <property type="molecule type" value="mRNA"/>
</dbReference>
<dbReference type="CCDS" id="CCDS76463.1">
    <molecule id="O75530-2"/>
</dbReference>
<dbReference type="CCDS" id="CCDS8273.1">
    <molecule id="O75530-1"/>
</dbReference>
<dbReference type="RefSeq" id="NP_001294936.1">
    <molecule id="O75530-2"/>
    <property type="nucleotide sequence ID" value="NM_001308007.2"/>
</dbReference>
<dbReference type="RefSeq" id="NP_003788.2">
    <molecule id="O75530-1"/>
    <property type="nucleotide sequence ID" value="NM_003797.4"/>
</dbReference>
<dbReference type="PDB" id="3IIW">
    <property type="method" value="X-ray"/>
    <property type="resolution" value="1.80 A"/>
    <property type="chains" value="A=77-441"/>
</dbReference>
<dbReference type="PDB" id="3IIY">
    <property type="method" value="X-ray"/>
    <property type="resolution" value="2.65 A"/>
    <property type="chains" value="A=77-441"/>
</dbReference>
<dbReference type="PDB" id="3IJ0">
    <property type="method" value="X-ray"/>
    <property type="resolution" value="2.45 A"/>
    <property type="chains" value="A=77-441"/>
</dbReference>
<dbReference type="PDB" id="3IJ1">
    <property type="method" value="X-ray"/>
    <property type="resolution" value="2.10 A"/>
    <property type="chains" value="A=77-441"/>
</dbReference>
<dbReference type="PDB" id="3IJC">
    <property type="method" value="X-ray"/>
    <property type="resolution" value="1.95 A"/>
    <property type="chains" value="A=77-441"/>
</dbReference>
<dbReference type="PDB" id="3JPX">
    <property type="method" value="X-ray"/>
    <property type="resolution" value="2.05 A"/>
    <property type="chains" value="A=40-441"/>
</dbReference>
<dbReference type="PDB" id="3JZG">
    <property type="method" value="X-ray"/>
    <property type="resolution" value="2.10 A"/>
    <property type="chains" value="A=40-441"/>
</dbReference>
<dbReference type="PDB" id="3JZH">
    <property type="method" value="X-ray"/>
    <property type="resolution" value="2.05 A"/>
    <property type="chains" value="A=40-441"/>
</dbReference>
<dbReference type="PDB" id="3JZN">
    <property type="method" value="X-ray"/>
    <property type="resolution" value="2.60 A"/>
    <property type="chains" value="A=76-441"/>
</dbReference>
<dbReference type="PDB" id="3K26">
    <property type="method" value="X-ray"/>
    <property type="resolution" value="1.58 A"/>
    <property type="chains" value="A=76-441"/>
</dbReference>
<dbReference type="PDB" id="3K27">
    <property type="method" value="X-ray"/>
    <property type="resolution" value="1.76 A"/>
    <property type="chains" value="A=76-441"/>
</dbReference>
<dbReference type="PDB" id="4W2R">
    <property type="method" value="X-ray"/>
    <property type="resolution" value="2.81 A"/>
    <property type="chains" value="E/F=81-441"/>
</dbReference>
<dbReference type="PDB" id="4X3E">
    <property type="method" value="X-ray"/>
    <property type="resolution" value="2.30 A"/>
    <property type="chains" value="A=77-441"/>
</dbReference>
<dbReference type="PDB" id="5GSA">
    <property type="method" value="X-ray"/>
    <property type="resolution" value="2.49 A"/>
    <property type="chains" value="A/B=76-441"/>
</dbReference>
<dbReference type="PDB" id="5H13">
    <property type="method" value="X-ray"/>
    <property type="resolution" value="1.90 A"/>
    <property type="chains" value="A=76-441"/>
</dbReference>
<dbReference type="PDB" id="5H14">
    <property type="method" value="X-ray"/>
    <property type="resolution" value="1.90 A"/>
    <property type="chains" value="A/B=76-441"/>
</dbReference>
<dbReference type="PDB" id="5H15">
    <property type="method" value="X-ray"/>
    <property type="resolution" value="2.27 A"/>
    <property type="chains" value="A/B=76-441"/>
</dbReference>
<dbReference type="PDB" id="5H17">
    <property type="method" value="X-ray"/>
    <property type="resolution" value="2.30 A"/>
    <property type="chains" value="A=76-441"/>
</dbReference>
<dbReference type="PDB" id="5H19">
    <property type="method" value="X-ray"/>
    <property type="resolution" value="1.90 A"/>
    <property type="chains" value="A=76-441"/>
</dbReference>
<dbReference type="PDB" id="5H24">
    <property type="method" value="X-ray"/>
    <property type="resolution" value="2.50 A"/>
    <property type="chains" value="A/B=76-441"/>
</dbReference>
<dbReference type="PDB" id="5H25">
    <property type="method" value="X-ray"/>
    <property type="resolution" value="2.88 A"/>
    <property type="chains" value="A/B=76-441"/>
</dbReference>
<dbReference type="PDB" id="5HYN">
    <property type="method" value="X-ray"/>
    <property type="resolution" value="2.95 A"/>
    <property type="chains" value="B/G/L/R=77-441"/>
</dbReference>
<dbReference type="PDB" id="5IJ7">
    <property type="method" value="X-ray"/>
    <property type="resolution" value="2.62 A"/>
    <property type="chains" value="E/F=81-441"/>
</dbReference>
<dbReference type="PDB" id="5IJ8">
    <property type="method" value="X-ray"/>
    <property type="resolution" value="2.99 A"/>
    <property type="chains" value="E/F=81-441"/>
</dbReference>
<dbReference type="PDB" id="5K0M">
    <property type="method" value="X-ray"/>
    <property type="resolution" value="1.83 A"/>
    <property type="chains" value="A=77-441"/>
</dbReference>
<dbReference type="PDB" id="5LS6">
    <property type="method" value="X-ray"/>
    <property type="resolution" value="3.47 A"/>
    <property type="chains" value="B/E/H/K=77-441"/>
</dbReference>
<dbReference type="PDB" id="5TTW">
    <property type="method" value="X-ray"/>
    <property type="resolution" value="1.74 A"/>
    <property type="chains" value="A/C=76-441"/>
</dbReference>
<dbReference type="PDB" id="5U5H">
    <property type="method" value="X-ray"/>
    <property type="resolution" value="1.80 A"/>
    <property type="chains" value="A=76-441"/>
</dbReference>
<dbReference type="PDB" id="5U5K">
    <property type="method" value="X-ray"/>
    <property type="resolution" value="2.33 A"/>
    <property type="chains" value="A=76-441"/>
</dbReference>
<dbReference type="PDB" id="5U5T">
    <property type="method" value="X-ray"/>
    <property type="resolution" value="1.60 A"/>
    <property type="chains" value="A/B=76-441"/>
</dbReference>
<dbReference type="PDB" id="5U62">
    <property type="method" value="X-ray"/>
    <property type="resolution" value="1.90 A"/>
    <property type="chains" value="A/B=76-441"/>
</dbReference>
<dbReference type="PDB" id="5U69">
    <property type="method" value="X-ray"/>
    <property type="resolution" value="1.28 A"/>
    <property type="chains" value="A=77-441"/>
</dbReference>
<dbReference type="PDB" id="5U6D">
    <property type="method" value="X-ray"/>
    <property type="resolution" value="1.64 A"/>
    <property type="chains" value="A=77-441"/>
</dbReference>
<dbReference type="PDB" id="5U8A">
    <property type="method" value="X-ray"/>
    <property type="resolution" value="1.45 A"/>
    <property type="chains" value="A=77-441"/>
</dbReference>
<dbReference type="PDB" id="5U8F">
    <property type="method" value="X-ray"/>
    <property type="resolution" value="1.34 A"/>
    <property type="chains" value="A=77-441"/>
</dbReference>
<dbReference type="PDB" id="5WG6">
    <property type="method" value="X-ray"/>
    <property type="resolution" value="3.90 A"/>
    <property type="chains" value="B/D=2-441"/>
</dbReference>
<dbReference type="PDB" id="5WP3">
    <property type="method" value="X-ray"/>
    <property type="resolution" value="2.55 A"/>
    <property type="chains" value="A=75-441"/>
</dbReference>
<dbReference type="PDB" id="5WUK">
    <property type="method" value="X-ray"/>
    <property type="resolution" value="2.03 A"/>
    <property type="chains" value="A=76-441"/>
</dbReference>
<dbReference type="PDB" id="6B3W">
    <property type="method" value="X-ray"/>
    <property type="resolution" value="3.05 A"/>
    <property type="chains" value="E/F=81-441"/>
</dbReference>
<dbReference type="PDB" id="6C23">
    <property type="method" value="EM"/>
    <property type="resolution" value="3.90 A"/>
    <property type="chains" value="L=1-441"/>
</dbReference>
<dbReference type="PDB" id="6C24">
    <property type="method" value="EM"/>
    <property type="resolution" value="3.50 A"/>
    <property type="chains" value="L=1-441"/>
</dbReference>
<dbReference type="PDB" id="6LO2">
    <property type="method" value="X-ray"/>
    <property type="resolution" value="2.21 A"/>
    <property type="chains" value="A/B=76-441"/>
</dbReference>
<dbReference type="PDB" id="6SFB">
    <property type="method" value="X-ray"/>
    <property type="resolution" value="1.52 A"/>
    <property type="chains" value="A/B=76-441"/>
</dbReference>
<dbReference type="PDB" id="6SFC">
    <property type="method" value="X-ray"/>
    <property type="resolution" value="2.00 A"/>
    <property type="chains" value="A/B=76-441"/>
</dbReference>
<dbReference type="PDB" id="6U4Y">
    <property type="method" value="X-ray"/>
    <property type="resolution" value="2.91 A"/>
    <property type="chains" value="D/E/F=78-441"/>
</dbReference>
<dbReference type="PDB" id="6V3X">
    <property type="method" value="X-ray"/>
    <property type="resolution" value="1.70 A"/>
    <property type="chains" value="A=75-441"/>
</dbReference>
<dbReference type="PDB" id="6V3Y">
    <property type="method" value="X-ray"/>
    <property type="resolution" value="1.63 A"/>
    <property type="chains" value="A=81-439"/>
</dbReference>
<dbReference type="PDB" id="6W7F">
    <property type="method" value="X-ray"/>
    <property type="resolution" value="2.20 A"/>
    <property type="chains" value="A=77-441"/>
</dbReference>
<dbReference type="PDB" id="6W7G">
    <property type="method" value="X-ray"/>
    <property type="resolution" value="1.85 A"/>
    <property type="chains" value="A=77-441"/>
</dbReference>
<dbReference type="PDB" id="6WKR">
    <property type="method" value="EM"/>
    <property type="resolution" value="3.50 A"/>
    <property type="chains" value="L=1-441"/>
</dbReference>
<dbReference type="PDB" id="6YVI">
    <property type="method" value="X-ray"/>
    <property type="resolution" value="2.26 A"/>
    <property type="chains" value="A/B=76-441"/>
</dbReference>
<dbReference type="PDB" id="6YVJ">
    <property type="method" value="X-ray"/>
    <property type="resolution" value="1.84 A"/>
    <property type="chains" value="A/B=76-441"/>
</dbReference>
<dbReference type="PDB" id="7KSO">
    <property type="method" value="EM"/>
    <property type="resolution" value="3.90 A"/>
    <property type="chains" value="B=1-441"/>
</dbReference>
<dbReference type="PDB" id="7KSR">
    <property type="method" value="EM"/>
    <property type="resolution" value="4.10 A"/>
    <property type="chains" value="B=1-441"/>
</dbReference>
<dbReference type="PDB" id="7KTP">
    <property type="method" value="EM"/>
    <property type="resolution" value="4.80 A"/>
    <property type="chains" value="B=1-441"/>
</dbReference>
<dbReference type="PDB" id="7KXT">
    <property type="method" value="X-ray"/>
    <property type="resolution" value="2.15 A"/>
    <property type="chains" value="A/B=40-441"/>
</dbReference>
<dbReference type="PDB" id="7MSB">
    <property type="method" value="X-ray"/>
    <property type="resolution" value="1.90 A"/>
    <property type="chains" value="A=77-441"/>
</dbReference>
<dbReference type="PDB" id="7MSD">
    <property type="method" value="X-ray"/>
    <property type="resolution" value="2.20 A"/>
    <property type="chains" value="A=77-441"/>
</dbReference>
<dbReference type="PDB" id="7P3C">
    <property type="method" value="X-ray"/>
    <property type="resolution" value="1.61 A"/>
    <property type="chains" value="A/B=76-441"/>
</dbReference>
<dbReference type="PDB" id="7P3G">
    <property type="method" value="X-ray"/>
    <property type="resolution" value="2.39 A"/>
    <property type="chains" value="A/B=76-441"/>
</dbReference>
<dbReference type="PDB" id="7P3J">
    <property type="method" value="X-ray"/>
    <property type="resolution" value="1.93 A"/>
    <property type="chains" value="A/B=76-441"/>
</dbReference>
<dbReference type="PDB" id="7QJG">
    <property type="method" value="X-ray"/>
    <property type="resolution" value="1.80 A"/>
    <property type="chains" value="A/B=77-441"/>
</dbReference>
<dbReference type="PDB" id="7QJU">
    <property type="method" value="X-ray"/>
    <property type="resolution" value="1.80 A"/>
    <property type="chains" value="A/B=77-441"/>
</dbReference>
<dbReference type="PDB" id="7QK4">
    <property type="method" value="X-ray"/>
    <property type="resolution" value="1.60 A"/>
    <property type="chains" value="A=77-441"/>
</dbReference>
<dbReference type="PDB" id="7SI4">
    <property type="method" value="X-ray"/>
    <property type="resolution" value="1.90 A"/>
    <property type="chains" value="A=40-441"/>
</dbReference>
<dbReference type="PDB" id="7SI5">
    <property type="method" value="X-ray"/>
    <property type="resolution" value="1.75 A"/>
    <property type="chains" value="A=40-441"/>
</dbReference>
<dbReference type="PDB" id="7TD5">
    <property type="method" value="X-ray"/>
    <property type="resolution" value="2.99 A"/>
    <property type="chains" value="B/G=77-441"/>
</dbReference>
<dbReference type="PDB" id="8EQV">
    <property type="method" value="EM"/>
    <property type="resolution" value="3.64 A"/>
    <property type="chains" value="E=1-441"/>
</dbReference>
<dbReference type="PDB" id="8FYH">
    <property type="method" value="EM"/>
    <property type="resolution" value="3.40 A"/>
    <property type="chains" value="C/I=1-441"/>
</dbReference>
<dbReference type="PDB" id="8T9G">
    <property type="method" value="EM"/>
    <property type="resolution" value="6.20 A"/>
    <property type="chains" value="F/K=1-441"/>
</dbReference>
<dbReference type="PDB" id="8TAS">
    <property type="method" value="EM"/>
    <property type="resolution" value="4.10 A"/>
    <property type="chains" value="G=1-441"/>
</dbReference>
<dbReference type="PDB" id="8TB9">
    <property type="method" value="EM"/>
    <property type="resolution" value="4.00 A"/>
    <property type="chains" value="G=1-441"/>
</dbReference>
<dbReference type="PDB" id="8VMI">
    <property type="method" value="EM"/>
    <property type="resolution" value="3.10 A"/>
    <property type="chains" value="A=1-441"/>
</dbReference>
<dbReference type="PDB" id="8VML">
    <property type="method" value="EM"/>
    <property type="resolution" value="3.50 A"/>
    <property type="chains" value="L=1-441"/>
</dbReference>
<dbReference type="PDB" id="8VNV">
    <property type="method" value="EM"/>
    <property type="resolution" value="3.10 A"/>
    <property type="chains" value="L=1-441"/>
</dbReference>
<dbReference type="PDB" id="8VNZ">
    <property type="method" value="EM"/>
    <property type="resolution" value="3.50 A"/>
    <property type="chains" value="L=1-441"/>
</dbReference>
<dbReference type="PDB" id="9C8U">
    <property type="method" value="EM"/>
    <property type="resolution" value="3.10 A"/>
    <property type="chains" value="C=75-441"/>
</dbReference>
<dbReference type="PDB" id="9DCH">
    <property type="method" value="EM"/>
    <property type="resolution" value="3.40 A"/>
    <property type="chains" value="C/J=1-441"/>
</dbReference>
<dbReference type="PDBsum" id="3IIW"/>
<dbReference type="PDBsum" id="3IIY"/>
<dbReference type="PDBsum" id="3IJ0"/>
<dbReference type="PDBsum" id="3IJ1"/>
<dbReference type="PDBsum" id="3IJC"/>
<dbReference type="PDBsum" id="3JPX"/>
<dbReference type="PDBsum" id="3JZG"/>
<dbReference type="PDBsum" id="3JZH"/>
<dbReference type="PDBsum" id="3JZN"/>
<dbReference type="PDBsum" id="3K26"/>
<dbReference type="PDBsum" id="3K27"/>
<dbReference type="PDBsum" id="4W2R"/>
<dbReference type="PDBsum" id="4X3E"/>
<dbReference type="PDBsum" id="5GSA"/>
<dbReference type="PDBsum" id="5H13"/>
<dbReference type="PDBsum" id="5H14"/>
<dbReference type="PDBsum" id="5H15"/>
<dbReference type="PDBsum" id="5H17"/>
<dbReference type="PDBsum" id="5H19"/>
<dbReference type="PDBsum" id="5H24"/>
<dbReference type="PDBsum" id="5H25"/>
<dbReference type="PDBsum" id="5HYN"/>
<dbReference type="PDBsum" id="5IJ7"/>
<dbReference type="PDBsum" id="5IJ8"/>
<dbReference type="PDBsum" id="5K0M"/>
<dbReference type="PDBsum" id="5LS6"/>
<dbReference type="PDBsum" id="5TTW"/>
<dbReference type="PDBsum" id="5U5H"/>
<dbReference type="PDBsum" id="5U5K"/>
<dbReference type="PDBsum" id="5U5T"/>
<dbReference type="PDBsum" id="5U62"/>
<dbReference type="PDBsum" id="5U69"/>
<dbReference type="PDBsum" id="5U6D"/>
<dbReference type="PDBsum" id="5U8A"/>
<dbReference type="PDBsum" id="5U8F"/>
<dbReference type="PDBsum" id="5WG6"/>
<dbReference type="PDBsum" id="5WP3"/>
<dbReference type="PDBsum" id="5WUK"/>
<dbReference type="PDBsum" id="6B3W"/>
<dbReference type="PDBsum" id="6C23"/>
<dbReference type="PDBsum" id="6C24"/>
<dbReference type="PDBsum" id="6LO2"/>
<dbReference type="PDBsum" id="6SFB"/>
<dbReference type="PDBsum" id="6SFC"/>
<dbReference type="PDBsum" id="6U4Y"/>
<dbReference type="PDBsum" id="6V3X"/>
<dbReference type="PDBsum" id="6V3Y"/>
<dbReference type="PDBsum" id="6W7F"/>
<dbReference type="PDBsum" id="6W7G"/>
<dbReference type="PDBsum" id="6WKR"/>
<dbReference type="PDBsum" id="6YVI"/>
<dbReference type="PDBsum" id="6YVJ"/>
<dbReference type="PDBsum" id="7KSO"/>
<dbReference type="PDBsum" id="7KSR"/>
<dbReference type="PDBsum" id="7KTP"/>
<dbReference type="PDBsum" id="7KXT"/>
<dbReference type="PDBsum" id="7MSB"/>
<dbReference type="PDBsum" id="7MSD"/>
<dbReference type="PDBsum" id="7P3C"/>
<dbReference type="PDBsum" id="7P3G"/>
<dbReference type="PDBsum" id="7P3J"/>
<dbReference type="PDBsum" id="7QJG"/>
<dbReference type="PDBsum" id="7QJU"/>
<dbReference type="PDBsum" id="7QK4"/>
<dbReference type="PDBsum" id="7SI4"/>
<dbReference type="PDBsum" id="7SI5"/>
<dbReference type="PDBsum" id="7TD5"/>
<dbReference type="PDBsum" id="8EQV"/>
<dbReference type="PDBsum" id="8FYH"/>
<dbReference type="PDBsum" id="8T9G"/>
<dbReference type="PDBsum" id="8TAS"/>
<dbReference type="PDBsum" id="8TB9"/>
<dbReference type="PDBsum" id="8VMI"/>
<dbReference type="PDBsum" id="8VML"/>
<dbReference type="PDBsum" id="8VNV"/>
<dbReference type="PDBsum" id="8VNZ"/>
<dbReference type="PDBsum" id="9C8U"/>
<dbReference type="PDBsum" id="9DCH"/>
<dbReference type="EMDB" id="EMD-21707"/>
<dbReference type="EMDB" id="EMD-23021"/>
<dbReference type="EMDB" id="EMD-23022"/>
<dbReference type="EMDB" id="EMD-23024"/>
<dbReference type="EMDB" id="EMD-23025"/>
<dbReference type="EMDB" id="EMD-23103"/>
<dbReference type="EMDB" id="EMD-28547"/>
<dbReference type="EMDB" id="EMD-29578"/>
<dbReference type="EMDB" id="EMD-29647"/>
<dbReference type="EMDB" id="EMD-29656"/>
<dbReference type="EMDB" id="EMD-41110"/>
<dbReference type="EMDB" id="EMD-41141"/>
<dbReference type="EMDB" id="EMD-41146"/>
<dbReference type="EMDB" id="EMD-43357"/>
<dbReference type="EMDB" id="EMD-43359"/>
<dbReference type="EMDB" id="EMD-43361"/>
<dbReference type="EMDB" id="EMD-43362"/>
<dbReference type="EMDB" id="EMD-46722"/>
<dbReference type="EMDB" id="EMD-46726"/>
<dbReference type="EMDB" id="EMD-46751"/>
<dbReference type="EMDB" id="EMD-7334"/>
<dbReference type="EMDB" id="EMD-7335"/>
<dbReference type="SMR" id="O75530"/>
<dbReference type="BioGRID" id="114265">
    <property type="interactions" value="636"/>
</dbReference>
<dbReference type="ComplexPortal" id="CPX-2196">
    <property type="entry name" value="Polycomb repressive complex 2.1, EZH1-RBBP4-PCL3-PALI1 variant"/>
</dbReference>
<dbReference type="ComplexPortal" id="CPX-2198">
    <property type="entry name" value="Polycomb repressive complex 2.1,EZH2-RBBP4-PCL3-PALI1 variant"/>
</dbReference>
<dbReference type="ComplexPortal" id="CPX-2204">
    <property type="entry name" value="Polycomb repressive complex 2.1, EZH2-RBBP4-PCL1-PALI1 variant"/>
</dbReference>
<dbReference type="ComplexPortal" id="CPX-2205">
    <property type="entry name" value="Polycomb repressive complex 2.1, EZH1-RBBP7-PCL1-EPOP variant"/>
</dbReference>
<dbReference type="ComplexPortal" id="CPX-2209">
    <property type="entry name" value="Polycomb repressive complex 2.2, EZH2-RBBP4 variant"/>
</dbReference>
<dbReference type="ComplexPortal" id="CPX-2212">
    <property type="entry name" value="Polycomb repressive complex 2.2, EZH1-RBBP7 variant"/>
</dbReference>
<dbReference type="ComplexPortal" id="CPX-2213">
    <property type="entry name" value="Polycomb repressive complex 2.2, EZH2-RBBP7 variant"/>
</dbReference>
<dbReference type="ComplexPortal" id="CPX-2307">
    <property type="entry name" value="Polycomb repressive complex 2.1, EZH1-RBBP7-PCL1-PALI1 variant"/>
</dbReference>
<dbReference type="ComplexPortal" id="CPX-2309">
    <property type="entry name" value="Polycomb repressive complex 2.1, EZH1-RBBP7-PCL2-PALI1 variant"/>
</dbReference>
<dbReference type="ComplexPortal" id="CPX-2310">
    <property type="entry name" value="Polycomb repressive complex 2.1, EZH1-RBBP4-PCL2-PALI1 variant"/>
</dbReference>
<dbReference type="ComplexPortal" id="CPX-2311">
    <property type="entry name" value="Polycomb repressive complex 2.1, EZH2-RBBP7-PCL1-PALI1 variant"/>
</dbReference>
<dbReference type="ComplexPortal" id="CPX-2312">
    <property type="entry name" value="Polycomb repressive complex 2.1, EZH2-RBBP4-PCL2-PALI1 variant"/>
</dbReference>
<dbReference type="ComplexPortal" id="CPX-2314">
    <property type="entry name" value="Polycomb repressive complex 2.1,EZH2-RBBP7-PCL2-PALI1 variant"/>
</dbReference>
<dbReference type="ComplexPortal" id="CPX-2316">
    <property type="entry name" value="Polycomb repressive complex 2.1,EZH2-RBBP7-PCL3-PALI1 variant"/>
</dbReference>
<dbReference type="ComplexPortal" id="CPX-2317">
    <property type="entry name" value="Polycomb repressive complex 2.1, EZH1-RBBP4-PCL1-EPOP variant"/>
</dbReference>
<dbReference type="ComplexPortal" id="CPX-2318">
    <property type="entry name" value="Polycomb repressive complex 2.1, EZH1-RBBP4-PCL2-EPOP variant"/>
</dbReference>
<dbReference type="ComplexPortal" id="CPX-2320">
    <property type="entry name" value="Polycomb repressive complex 2.1, EZH1-RBBP7-PCL2-EPOP variant"/>
</dbReference>
<dbReference type="ComplexPortal" id="CPX-2322">
    <property type="entry name" value="Polycomb repressive complex 2.1, EZH1-RBBP4-PCL3-EPOP variant"/>
</dbReference>
<dbReference type="ComplexPortal" id="CPX-2323">
    <property type="entry name" value="Polycomb repressive complex 2.1, EZH1-RBBP7-PCL3-EPOP variant"/>
</dbReference>
<dbReference type="ComplexPortal" id="CPX-2324">
    <property type="entry name" value="Polycomb repressive complex 2.1, EZH2-RBBP4-PCL1-EPOP variant"/>
</dbReference>
<dbReference type="ComplexPortal" id="CPX-2325">
    <property type="entry name" value="Polycomb repressive complex 2.1, EZH2-RBBP7-PCL1-EPOP variant"/>
</dbReference>
<dbReference type="ComplexPortal" id="CPX-2326">
    <property type="entry name" value="Polycomb repressive complex 2.1, EZH2-RBBP4-PCL2-EPOP variant"/>
</dbReference>
<dbReference type="ComplexPortal" id="CPX-2327">
    <property type="entry name" value="Polycomb repressive complex 2.1, EZH2-RBBP7-PCL2-EPOP variant"/>
</dbReference>
<dbReference type="ComplexPortal" id="CPX-2328">
    <property type="entry name" value="Polycomb repressive complex 2.1, EZH2-RBBP4-PCL3-EPOP variant"/>
</dbReference>
<dbReference type="ComplexPortal" id="CPX-2329">
    <property type="entry name" value="Polycomb repressive complex 2.1, EZH2-RBBP7-PCL3-EPOP variant"/>
</dbReference>
<dbReference type="ComplexPortal" id="CPX-2330">
    <property type="entry name" value="Polycomb repressive complex 2.2, EZH1-RBBP4 variant"/>
</dbReference>
<dbReference type="ComplexPortal" id="CPX-2569">
    <property type="entry name" value="Polycomb repressive complex 2.1, EZH1-RBBP4-PCL1-PALI1 variant"/>
</dbReference>
<dbReference type="ComplexPortal" id="CPX-2570">
    <property type="entry name" value="Polycomb repressive complex 2.1, EZH1-RBBP7-PCL3-PALI1 variant"/>
</dbReference>
<dbReference type="CORUM" id="O75530"/>
<dbReference type="DIP" id="DIP-36673N"/>
<dbReference type="FunCoup" id="O75530">
    <property type="interactions" value="4229"/>
</dbReference>
<dbReference type="IntAct" id="O75530">
    <property type="interactions" value="106"/>
</dbReference>
<dbReference type="MINT" id="O75530"/>
<dbReference type="STRING" id="9606.ENSP00000338186"/>
<dbReference type="BindingDB" id="O75530"/>
<dbReference type="ChEMBL" id="CHEMBL2189117"/>
<dbReference type="DrugBank" id="DB19205">
    <property type="generic name" value="MAK-683"/>
</dbReference>
<dbReference type="DrugCentral" id="O75530"/>
<dbReference type="GuidetoPHARMACOLOGY" id="2487"/>
<dbReference type="GlyGen" id="O75530">
    <property type="glycosylation" value="1 site, 1 N-linked glycan (1 site)"/>
</dbReference>
<dbReference type="iPTMnet" id="O75530"/>
<dbReference type="MetOSite" id="O75530"/>
<dbReference type="PhosphoSitePlus" id="O75530"/>
<dbReference type="SwissPalm" id="O75530"/>
<dbReference type="BioMuta" id="EED"/>
<dbReference type="jPOST" id="O75530"/>
<dbReference type="MassIVE" id="O75530"/>
<dbReference type="PaxDb" id="9606-ENSP00000263360"/>
<dbReference type="PeptideAtlas" id="O75530"/>
<dbReference type="ProteomicsDB" id="50068">
    <molecule id="O75530-1"/>
</dbReference>
<dbReference type="ProteomicsDB" id="50069">
    <molecule id="O75530-2"/>
</dbReference>
<dbReference type="ProteomicsDB" id="50070">
    <molecule id="O75530-3"/>
</dbReference>
<dbReference type="Pumba" id="O75530"/>
<dbReference type="ABCD" id="O75530">
    <property type="antibodies" value="1 sequenced antibody"/>
</dbReference>
<dbReference type="Antibodypedia" id="31435">
    <property type="antibodies" value="386 antibodies from 40 providers"/>
</dbReference>
<dbReference type="DNASU" id="8726"/>
<dbReference type="Ensembl" id="ENST00000263360.11">
    <molecule id="O75530-1"/>
    <property type="protein sequence ID" value="ENSP00000263360.6"/>
    <property type="gene ID" value="ENSG00000074266.24"/>
</dbReference>
<dbReference type="Ensembl" id="ENST00000327320.8">
    <molecule id="O75530-3"/>
    <property type="protein sequence ID" value="ENSP00000315587.4"/>
    <property type="gene ID" value="ENSG00000074266.24"/>
</dbReference>
<dbReference type="Ensembl" id="ENST00000351625.10">
    <molecule id="O75530-2"/>
    <property type="protein sequence ID" value="ENSP00000338186.5"/>
    <property type="gene ID" value="ENSG00000074266.24"/>
</dbReference>
<dbReference type="Ensembl" id="ENST00000672825.1">
    <molecule id="O75530-1"/>
    <property type="protein sequence ID" value="ENSP00000500834.1"/>
    <property type="gene ID" value="ENSG00000074266.24"/>
</dbReference>
<dbReference type="GeneID" id="8726"/>
<dbReference type="KEGG" id="hsa:8726"/>
<dbReference type="MANE-Select" id="ENST00000263360.11">
    <property type="protein sequence ID" value="ENSP00000263360.6"/>
    <property type="RefSeq nucleotide sequence ID" value="NM_003797.5"/>
    <property type="RefSeq protein sequence ID" value="NP_003788.2"/>
</dbReference>
<dbReference type="UCSC" id="uc001pbp.4">
    <molecule id="O75530-1"/>
    <property type="organism name" value="human"/>
</dbReference>
<dbReference type="AGR" id="HGNC:3188"/>
<dbReference type="CTD" id="8726"/>
<dbReference type="DisGeNET" id="8726"/>
<dbReference type="GeneCards" id="EED"/>
<dbReference type="GeneReviews" id="EED"/>
<dbReference type="HGNC" id="HGNC:3188">
    <property type="gene designation" value="EED"/>
</dbReference>
<dbReference type="HPA" id="ENSG00000074266">
    <property type="expression patterns" value="Low tissue specificity"/>
</dbReference>
<dbReference type="MalaCards" id="EED"/>
<dbReference type="MIM" id="605984">
    <property type="type" value="gene"/>
</dbReference>
<dbReference type="MIM" id="617561">
    <property type="type" value="phenotype"/>
</dbReference>
<dbReference type="neXtProt" id="NX_O75530"/>
<dbReference type="NIAGADS" id="ENSG00000074266"/>
<dbReference type="OpenTargets" id="ENSG00000074266"/>
<dbReference type="Orphanet" id="659396">
    <property type="disease" value="Cohen-Gibson syndrome"/>
</dbReference>
<dbReference type="PharmGKB" id="PA27624"/>
<dbReference type="VEuPathDB" id="HostDB:ENSG00000074266"/>
<dbReference type="eggNOG" id="KOG1034">
    <property type="taxonomic scope" value="Eukaryota"/>
</dbReference>
<dbReference type="GeneTree" id="ENSGT00510000047334"/>
<dbReference type="HOGENOM" id="CLU_032683_1_0_1"/>
<dbReference type="InParanoid" id="O75530"/>
<dbReference type="OMA" id="RDVHRNY"/>
<dbReference type="OrthoDB" id="7318948at2759"/>
<dbReference type="PAN-GO" id="O75530">
    <property type="GO annotations" value="3 GO annotations based on evolutionary models"/>
</dbReference>
<dbReference type="PhylomeDB" id="O75530"/>
<dbReference type="TreeFam" id="TF314451"/>
<dbReference type="PathwayCommons" id="O75530"/>
<dbReference type="Reactome" id="R-HSA-212300">
    <property type="pathway name" value="PRC2 methylates histones and DNA"/>
</dbReference>
<dbReference type="Reactome" id="R-HSA-2559580">
    <property type="pathway name" value="Oxidative Stress Induced Senescence"/>
</dbReference>
<dbReference type="Reactome" id="R-HSA-3214841">
    <property type="pathway name" value="PKMTs methylate histone lysines"/>
</dbReference>
<dbReference type="Reactome" id="R-HSA-5617472">
    <property type="pathway name" value="Activation of anterior HOX genes in hindbrain development during early embryogenesis"/>
</dbReference>
<dbReference type="Reactome" id="R-HSA-8943724">
    <property type="pathway name" value="Regulation of PTEN gene transcription"/>
</dbReference>
<dbReference type="Reactome" id="R-HSA-8953750">
    <property type="pathway name" value="Transcriptional Regulation by E2F6"/>
</dbReference>
<dbReference type="Reactome" id="R-HSA-9609690">
    <property type="pathway name" value="HCMV Early Events"/>
</dbReference>
<dbReference type="Reactome" id="R-HSA-9710421">
    <property type="pathway name" value="Defective pyroptosis"/>
</dbReference>
<dbReference type="SignaLink" id="O75530"/>
<dbReference type="SIGNOR" id="O75530"/>
<dbReference type="BioGRID-ORCS" id="8726">
    <property type="hits" value="174 hits in 1181 CRISPR screens"/>
</dbReference>
<dbReference type="CD-CODE" id="F701F3BC">
    <property type="entry name" value="PcG body"/>
</dbReference>
<dbReference type="ChiTaRS" id="EED">
    <property type="organism name" value="human"/>
</dbReference>
<dbReference type="EvolutionaryTrace" id="O75530"/>
<dbReference type="GeneWiki" id="EED"/>
<dbReference type="GenomeRNAi" id="8726"/>
<dbReference type="Pharos" id="O75530">
    <property type="development level" value="Tchem"/>
</dbReference>
<dbReference type="PRO" id="PR:O75530"/>
<dbReference type="Proteomes" id="UP000005640">
    <property type="component" value="Chromosome 11"/>
</dbReference>
<dbReference type="RNAct" id="O75530">
    <property type="molecule type" value="protein"/>
</dbReference>
<dbReference type="Bgee" id="ENSG00000074266">
    <property type="expression patterns" value="Expressed in oviduct epithelium and 114 other cell types or tissues"/>
</dbReference>
<dbReference type="ExpressionAtlas" id="O75530">
    <property type="expression patterns" value="baseline and differential"/>
</dbReference>
<dbReference type="GO" id="GO:0005677">
    <property type="term" value="C:chromatin silencing complex"/>
    <property type="evidence" value="ECO:0007669"/>
    <property type="project" value="Ensembl"/>
</dbReference>
<dbReference type="GO" id="GO:0005829">
    <property type="term" value="C:cytosol"/>
    <property type="evidence" value="ECO:0000314"/>
    <property type="project" value="HPA"/>
</dbReference>
<dbReference type="GO" id="GO:0035098">
    <property type="term" value="C:ESC/E(Z) complex"/>
    <property type="evidence" value="ECO:0000314"/>
    <property type="project" value="UniProtKB"/>
</dbReference>
<dbReference type="GO" id="GO:0005654">
    <property type="term" value="C:nucleoplasm"/>
    <property type="evidence" value="ECO:0000314"/>
    <property type="project" value="HPA"/>
</dbReference>
<dbReference type="GO" id="GO:0005634">
    <property type="term" value="C:nucleus"/>
    <property type="evidence" value="ECO:0000303"/>
    <property type="project" value="UniProtKB"/>
</dbReference>
<dbReference type="GO" id="GO:0045120">
    <property type="term" value="C:pronucleus"/>
    <property type="evidence" value="ECO:0007669"/>
    <property type="project" value="Ensembl"/>
</dbReference>
<dbReference type="GO" id="GO:0001739">
    <property type="term" value="C:sex chromatin"/>
    <property type="evidence" value="ECO:0007669"/>
    <property type="project" value="Ensembl"/>
</dbReference>
<dbReference type="GO" id="GO:0003682">
    <property type="term" value="F:chromatin binding"/>
    <property type="evidence" value="ECO:0007669"/>
    <property type="project" value="Ensembl"/>
</dbReference>
<dbReference type="GO" id="GO:0008047">
    <property type="term" value="F:enzyme activator activity"/>
    <property type="evidence" value="ECO:0000314"/>
    <property type="project" value="MGI"/>
</dbReference>
<dbReference type="GO" id="GO:0042802">
    <property type="term" value="F:identical protein binding"/>
    <property type="evidence" value="ECO:0000353"/>
    <property type="project" value="IntAct"/>
</dbReference>
<dbReference type="GO" id="GO:0035064">
    <property type="term" value="F:methylated histone binding"/>
    <property type="evidence" value="ECO:0007669"/>
    <property type="project" value="Ensembl"/>
</dbReference>
<dbReference type="GO" id="GO:0001222">
    <property type="term" value="F:transcription corepressor binding"/>
    <property type="evidence" value="ECO:0000353"/>
    <property type="project" value="ARUK-UCL"/>
</dbReference>
<dbReference type="GO" id="GO:1990830">
    <property type="term" value="P:cellular response to leukemia inhibitory factor"/>
    <property type="evidence" value="ECO:0007669"/>
    <property type="project" value="Ensembl"/>
</dbReference>
<dbReference type="GO" id="GO:0140718">
    <property type="term" value="P:facultative heterochromatin formation"/>
    <property type="evidence" value="ECO:0007669"/>
    <property type="project" value="Ensembl"/>
</dbReference>
<dbReference type="GO" id="GO:0071514">
    <property type="term" value="P:genomic imprinting"/>
    <property type="evidence" value="ECO:0007669"/>
    <property type="project" value="Ensembl"/>
</dbReference>
<dbReference type="GO" id="GO:0031507">
    <property type="term" value="P:heterochromatin formation"/>
    <property type="evidence" value="ECO:0000318"/>
    <property type="project" value="GO_Central"/>
</dbReference>
<dbReference type="GO" id="GO:0045892">
    <property type="term" value="P:negative regulation of DNA-templated transcription"/>
    <property type="evidence" value="ECO:0000303"/>
    <property type="project" value="UniProtKB"/>
</dbReference>
<dbReference type="GO" id="GO:0000122">
    <property type="term" value="P:negative regulation of transcription by RNA polymerase II"/>
    <property type="evidence" value="ECO:0000318"/>
    <property type="project" value="GO_Central"/>
</dbReference>
<dbReference type="GO" id="GO:0048709">
    <property type="term" value="P:oligodendrocyte differentiation"/>
    <property type="evidence" value="ECO:0007669"/>
    <property type="project" value="Ensembl"/>
</dbReference>
<dbReference type="GO" id="GO:2000011">
    <property type="term" value="P:regulation of adaxial/abaxial pattern formation"/>
    <property type="evidence" value="ECO:0007669"/>
    <property type="project" value="Ensembl"/>
</dbReference>
<dbReference type="GO" id="GO:0021510">
    <property type="term" value="P:spinal cord development"/>
    <property type="evidence" value="ECO:0007669"/>
    <property type="project" value="Ensembl"/>
</dbReference>
<dbReference type="FunFam" id="2.130.10.10:FF:000056">
    <property type="entry name" value="Polycomb protein eed"/>
    <property type="match status" value="1"/>
</dbReference>
<dbReference type="Gene3D" id="2.130.10.10">
    <property type="entry name" value="YVTN repeat-like/Quinoprotein amine dehydrogenase"/>
    <property type="match status" value="1"/>
</dbReference>
<dbReference type="IDEAL" id="IID00530"/>
<dbReference type="InterPro" id="IPR051243">
    <property type="entry name" value="PcG_WD-repeat"/>
</dbReference>
<dbReference type="InterPro" id="IPR015943">
    <property type="entry name" value="WD40/YVTN_repeat-like_dom_sf"/>
</dbReference>
<dbReference type="InterPro" id="IPR019775">
    <property type="entry name" value="WD40_repeat_CS"/>
</dbReference>
<dbReference type="InterPro" id="IPR036322">
    <property type="entry name" value="WD40_repeat_dom_sf"/>
</dbReference>
<dbReference type="InterPro" id="IPR001680">
    <property type="entry name" value="WD40_rpt"/>
</dbReference>
<dbReference type="PANTHER" id="PTHR10253">
    <property type="entry name" value="POLYCOMB PROTEIN"/>
    <property type="match status" value="1"/>
</dbReference>
<dbReference type="Pfam" id="PF00400">
    <property type="entry name" value="WD40"/>
    <property type="match status" value="3"/>
</dbReference>
<dbReference type="SMART" id="SM00320">
    <property type="entry name" value="WD40"/>
    <property type="match status" value="6"/>
</dbReference>
<dbReference type="SUPFAM" id="SSF50978">
    <property type="entry name" value="WD40 repeat-like"/>
    <property type="match status" value="1"/>
</dbReference>
<dbReference type="PROSITE" id="PS00678">
    <property type="entry name" value="WD_REPEATS_1"/>
    <property type="match status" value="1"/>
</dbReference>
<dbReference type="PROSITE" id="PS50082">
    <property type="entry name" value="WD_REPEATS_2"/>
    <property type="match status" value="2"/>
</dbReference>
<dbReference type="PROSITE" id="PS50294">
    <property type="entry name" value="WD_REPEATS_REGION"/>
    <property type="match status" value="1"/>
</dbReference>
<sequence>MSEREVSTAPAGTDMPAAKKQKLSSDENSNPDLSGDENDDAVSIESGTNTERPDTPTNTPNAPGRKSWGKGKWKSKKCKYSFKCVNSLKEDHNQPLFGVQFNWHSKEGDPLVFATVGSNRVTLYECHSQGEIRLLQSYVDADADENFYTCAWTYDSNTSHPLLAVAGSRGIIRIINPITMQCIKHYVGHGNAINELKFHPRDPNLLLSVSKDHALRLWNIQTDTLVAIFGGVEGHRDEVLSADYDLLGEKIMSCGMDHSLKLWRINSKRMMNAIKESYDYNPNKTNRPFISQKIHFPDFSTRDIHRNYVDCVRWLGDLILSKSCENAIVCWKPGKMEDDIDKIKPSESNVTILGRFDYSQCDIWYMRFSMDFWQKMLALGNQVGKLYVWDLEVEDPHKAKCTTLTHHKCGAAIRQTSFSRDSSILIAVCDDASIWRWDRLR</sequence>
<keyword id="KW-0002">3D-structure</keyword>
<keyword id="KW-0007">Acetylation</keyword>
<keyword id="KW-0024">Alternative initiation</keyword>
<keyword id="KW-0025">Alternative splicing</keyword>
<keyword id="KW-0156">Chromatin regulator</keyword>
<keyword id="KW-0158">Chromosome</keyword>
<keyword id="KW-0225">Disease variant</keyword>
<keyword id="KW-0945">Host-virus interaction</keyword>
<keyword id="KW-0488">Methylation</keyword>
<keyword id="KW-0539">Nucleus</keyword>
<keyword id="KW-0597">Phosphoprotein</keyword>
<keyword id="KW-1267">Proteomics identification</keyword>
<keyword id="KW-1185">Reference proteome</keyword>
<keyword id="KW-0677">Repeat</keyword>
<keyword id="KW-0678">Repressor</keyword>
<keyword id="KW-0804">Transcription</keyword>
<keyword id="KW-0805">Transcription regulation</keyword>
<keyword id="KW-0853">WD repeat</keyword>
<proteinExistence type="evidence at protein level"/>
<feature type="initiator methionine" description="Removed" evidence="36">
    <location>
        <position position="1"/>
    </location>
</feature>
<feature type="chain" id="PRO_0000343725" description="Polycomb protein EED">
    <location>
        <begin position="2"/>
        <end position="441"/>
    </location>
</feature>
<feature type="repeat" description="WD 1">
    <location>
        <begin position="91"/>
        <end position="134"/>
    </location>
</feature>
<feature type="repeat" description="WD 2">
    <location>
        <begin position="142"/>
        <end position="185"/>
    </location>
</feature>
<feature type="repeat" description="WD 3">
    <location>
        <begin position="188"/>
        <end position="228"/>
    </location>
</feature>
<feature type="repeat" description="WD 4">
    <location>
        <begin position="234"/>
        <end position="275"/>
    </location>
</feature>
<feature type="repeat" description="WD 5">
    <location>
        <begin position="304"/>
        <end position="341"/>
    </location>
</feature>
<feature type="repeat" description="WD 6">
    <location>
        <begin position="359"/>
        <end position="399"/>
    </location>
</feature>
<feature type="repeat" description="WD 7">
    <location>
        <begin position="408"/>
        <end position="441"/>
    </location>
</feature>
<feature type="region of interest" description="Disordered" evidence="3">
    <location>
        <begin position="1"/>
        <end position="72"/>
    </location>
</feature>
<feature type="region of interest" description="Interaction with EZH2" evidence="1">
    <location>
        <begin position="81"/>
        <end position="441"/>
    </location>
</feature>
<feature type="region of interest" description="Required for interaction with the matrix protein MA of HIV-1">
    <location>
        <begin position="149"/>
        <end position="303"/>
    </location>
</feature>
<feature type="region of interest" description="Required for interaction with the matrix protein MA of HIV-1">
    <location>
        <begin position="301"/>
        <end position="441"/>
    </location>
</feature>
<feature type="compositionally biased region" description="Polar residues" evidence="3">
    <location>
        <begin position="45"/>
        <end position="61"/>
    </location>
</feature>
<feature type="modified residue" description="N-acetylserine" evidence="36">
    <location>
        <position position="2"/>
    </location>
</feature>
<feature type="modified residue" description="Phosphoserine" evidence="37">
    <location>
        <position position="2"/>
    </location>
</feature>
<feature type="modified residue" description="Phosphoserine" evidence="2">
    <location>
        <position position="34"/>
    </location>
</feature>
<feature type="modified residue" description="Phosphothreonine" evidence="35">
    <location>
        <position position="55"/>
    </location>
</feature>
<feature type="modified residue" description="N6,N6,N6-trimethyllysine; alternate" evidence="18">
    <location>
        <position position="66"/>
    </location>
</feature>
<feature type="modified residue" description="N6,N6-dimethyllysine; alternate" evidence="18">
    <location>
        <position position="66"/>
    </location>
</feature>
<feature type="modified residue" description="N6-methyllysine; alternate" evidence="18">
    <location>
        <position position="66"/>
    </location>
</feature>
<feature type="modified residue" description="N6,N6,N6-trimethyllysine; alternate" evidence="18">
    <location>
        <position position="197"/>
    </location>
</feature>
<feature type="modified residue" description="N6,N6-dimethyllysine; alternate" evidence="18">
    <location>
        <position position="197"/>
    </location>
</feature>
<feature type="modified residue" description="N6-methyllysine; alternate" evidence="18">
    <location>
        <position position="197"/>
    </location>
</feature>
<feature type="modified residue" description="N6,N6,N6-trimethyllysine; alternate" evidence="18">
    <location>
        <position position="268"/>
    </location>
</feature>
<feature type="modified residue" description="N6,N6-dimethyllysine; alternate" evidence="18">
    <location>
        <position position="268"/>
    </location>
</feature>
<feature type="modified residue" description="N6-methyllysine; alternate" evidence="18">
    <location>
        <position position="268"/>
    </location>
</feature>
<feature type="modified residue" description="N6,N6,N6-trimethyllysine; alternate" evidence="18">
    <location>
        <position position="284"/>
    </location>
</feature>
<feature type="modified residue" description="N6,N6-dimethyllysine; alternate" evidence="18">
    <location>
        <position position="284"/>
    </location>
</feature>
<feature type="modified residue" description="N6-methyllysine; alternate" evidence="18">
    <location>
        <position position="284"/>
    </location>
</feature>
<feature type="splice variant" id="VSP_034691" description="In isoform 2." evidence="29">
    <original>K</original>
    <variation>KSGRAILHSHQQCMRDPVSPNLRQHL</variation>
    <location>
        <position position="322"/>
    </location>
</feature>
<feature type="splice variant" id="VSP_034692" description="In isoform 3." evidence="31">
    <location>
        <begin position="401"/>
        <end position="441"/>
    </location>
</feature>
<feature type="sequence variant" id="VAR_079255" description="In COGIS." evidence="24">
    <original>N</original>
    <variation>S</variation>
    <location>
        <position position="194"/>
    </location>
</feature>
<feature type="sequence variant" id="VAR_079256" description="In COGIS." evidence="24">
    <original>R</original>
    <variation>G</variation>
    <location>
        <position position="236"/>
    </location>
</feature>
<feature type="sequence variant" id="VAR_078316" description="In COGIS; decreased trimethylation of 'Lys-27' of histone H3; no effect on interaction with EZH2; dbSNP:rs1131692176." evidence="23">
    <original>R</original>
    <variation>T</variation>
    <location>
        <position position="236"/>
    </location>
</feature>
<feature type="sequence variant" id="VAR_079257" description="In COGIS; dbSNP:rs1131692174." evidence="21">
    <original>H</original>
    <variation>Y</variation>
    <location>
        <position position="258"/>
    </location>
</feature>
<feature type="sequence variant" id="VAR_079258" description="In COGIS; dbSNP:rs1131692175." evidence="22">
    <original>R</original>
    <variation>G</variation>
    <location>
        <position position="302"/>
    </location>
</feature>
<feature type="sequence variant" id="VAR_078317" description="In COGIS; decreased trimethylation of 'Lys-27' of histone H3; dbSNP:rs1131692173." evidence="20 23">
    <original>R</original>
    <variation>S</variation>
    <location>
        <position position="302"/>
    </location>
</feature>
<feature type="mutagenesis site" description="Abolishes binding to H3K27me3." evidence="18">
    <original>F</original>
    <variation>A</variation>
    <location>
        <position position="97"/>
    </location>
</feature>
<feature type="mutagenesis site" description="Abolishes binding to H3K27me3." evidence="18">
    <original>Y</original>
    <variation>A</variation>
    <location>
        <position position="148"/>
    </location>
</feature>
<feature type="mutagenesis site" description="Impairs interaction with EZH2." evidence="25">
    <original>I</original>
    <variation>N</variation>
    <location>
        <position position="193"/>
    </location>
</feature>
<feature type="mutagenesis site" description="Impairs interaction with EZH2." evidence="25">
    <original>L</original>
    <variation>P</variation>
    <location>
        <position position="196"/>
    </location>
</feature>
<feature type="mutagenesis site" description="Impairs interaction with the matrix protein MA of HIV-1." evidence="28">
    <original>ST</original>
    <variation>AA</variation>
    <location>
        <begin position="300"/>
        <end position="301"/>
    </location>
</feature>
<feature type="mutagenesis site" description="Impairs interaction with the matrix protein MA of HIV-1." evidence="28">
    <original>HRNY</original>
    <variation>AAAA</variation>
    <location>
        <begin position="305"/>
        <end position="308"/>
    </location>
</feature>
<feature type="mutagenesis site" description="Abolishes binding to H3K27me3." evidence="18">
    <original>W</original>
    <variation>A</variation>
    <location>
        <position position="364"/>
    </location>
</feature>
<feature type="mutagenesis site" description="Abolishes binding to H3K27me3." evidence="18">
    <original>W</original>
    <variation>L</variation>
    <location>
        <position position="364"/>
    </location>
</feature>
<feature type="mutagenesis site" description="Abolishes binding to H3K27me3." evidence="18">
    <original>Y</original>
    <variation>A</variation>
    <location>
        <position position="365"/>
    </location>
</feature>
<feature type="sequence conflict" description="In Ref. 8; AAC68675." evidence="32" ref="8">
    <original>D</original>
    <variation>E</variation>
    <location>
        <position position="32"/>
    </location>
</feature>
<feature type="sequence conflict" description="In Ref. 3; AAD08714/AAD08815." evidence="32" ref="3">
    <original>K</original>
    <variation>S</variation>
    <location>
        <position position="74"/>
    </location>
</feature>
<feature type="sequence conflict" description="In Ref. 3; AAD08714/AAD08815." evidence="32" ref="3">
    <original>E</original>
    <variation>K</variation>
    <location>
        <position position="337"/>
    </location>
</feature>
<feature type="sequence conflict" description="In Ref. 4; BAF84809." evidence="32" ref="4">
    <original>S</original>
    <variation>G</variation>
    <location>
        <position position="417"/>
    </location>
</feature>
<feature type="strand" evidence="41">
    <location>
        <begin position="83"/>
        <end position="89"/>
    </location>
</feature>
<feature type="strand" evidence="41">
    <location>
        <begin position="96"/>
        <end position="101"/>
    </location>
</feature>
<feature type="strand" evidence="39">
    <location>
        <begin position="103"/>
        <end position="105"/>
    </location>
</feature>
<feature type="strand" evidence="40">
    <location>
        <begin position="107"/>
        <end position="109"/>
    </location>
</feature>
<feature type="strand" evidence="41">
    <location>
        <begin position="111"/>
        <end position="117"/>
    </location>
</feature>
<feature type="strand" evidence="41">
    <location>
        <begin position="120"/>
        <end position="126"/>
    </location>
</feature>
<feature type="helix" evidence="43">
    <location>
        <begin position="128"/>
        <end position="130"/>
    </location>
</feature>
<feature type="strand" evidence="41">
    <location>
        <begin position="132"/>
        <end position="139"/>
    </location>
</feature>
<feature type="strand" evidence="41">
    <location>
        <begin position="147"/>
        <end position="154"/>
    </location>
</feature>
<feature type="turn" evidence="41">
    <location>
        <begin position="156"/>
        <end position="158"/>
    </location>
</feature>
<feature type="strand" evidence="41">
    <location>
        <begin position="161"/>
        <end position="167"/>
    </location>
</feature>
<feature type="turn" evidence="42">
    <location>
        <begin position="168"/>
        <end position="170"/>
    </location>
</feature>
<feature type="strand" evidence="41">
    <location>
        <begin position="171"/>
        <end position="175"/>
    </location>
</feature>
<feature type="turn" evidence="41">
    <location>
        <begin position="177"/>
        <end position="179"/>
    </location>
</feature>
<feature type="strand" evidence="41">
    <location>
        <begin position="182"/>
        <end position="190"/>
    </location>
</feature>
<feature type="strand" evidence="41">
    <location>
        <begin position="193"/>
        <end position="198"/>
    </location>
</feature>
<feature type="strand" evidence="42">
    <location>
        <begin position="200"/>
        <end position="202"/>
    </location>
</feature>
<feature type="strand" evidence="41">
    <location>
        <begin position="205"/>
        <end position="210"/>
    </location>
</feature>
<feature type="strand" evidence="42">
    <location>
        <begin position="211"/>
        <end position="213"/>
    </location>
</feature>
<feature type="strand" evidence="41">
    <location>
        <begin position="215"/>
        <end position="219"/>
    </location>
</feature>
<feature type="turn" evidence="41">
    <location>
        <begin position="220"/>
        <end position="223"/>
    </location>
</feature>
<feature type="strand" evidence="41">
    <location>
        <begin position="224"/>
        <end position="229"/>
    </location>
</feature>
<feature type="strand" evidence="44">
    <location>
        <begin position="231"/>
        <end position="234"/>
    </location>
</feature>
<feature type="strand" evidence="41">
    <location>
        <begin position="239"/>
        <end position="244"/>
    </location>
</feature>
<feature type="strand" evidence="41">
    <location>
        <begin position="248"/>
        <end position="255"/>
    </location>
</feature>
<feature type="strand" evidence="41">
    <location>
        <begin position="260"/>
        <end position="265"/>
    </location>
</feature>
<feature type="helix" evidence="41">
    <location>
        <begin position="268"/>
        <end position="279"/>
    </location>
</feature>
<feature type="helix" evidence="41">
    <location>
        <begin position="282"/>
        <end position="284"/>
    </location>
</feature>
<feature type="strand" evidence="41">
    <location>
        <begin position="292"/>
        <end position="294"/>
    </location>
</feature>
<feature type="strand" evidence="41">
    <location>
        <begin position="298"/>
        <end position="301"/>
    </location>
</feature>
<feature type="strand" evidence="46">
    <location>
        <begin position="302"/>
        <end position="304"/>
    </location>
</feature>
<feature type="strand" evidence="41">
    <location>
        <begin position="311"/>
        <end position="315"/>
    </location>
</feature>
<feature type="strand" evidence="41">
    <location>
        <begin position="318"/>
        <end position="322"/>
    </location>
</feature>
<feature type="strand" evidence="41">
    <location>
        <begin position="324"/>
        <end position="335"/>
    </location>
</feature>
<feature type="helix" evidence="41">
    <location>
        <begin position="340"/>
        <end position="342"/>
    </location>
</feature>
<feature type="strand" evidence="41">
    <location>
        <begin position="350"/>
        <end position="357"/>
    </location>
</feature>
<feature type="strand" evidence="45">
    <location>
        <begin position="363"/>
        <end position="365"/>
    </location>
</feature>
<feature type="strand" evidence="41">
    <location>
        <begin position="368"/>
        <end position="370"/>
    </location>
</feature>
<feature type="strand" evidence="38">
    <location>
        <begin position="372"/>
        <end position="374"/>
    </location>
</feature>
<feature type="strand" evidence="41">
    <location>
        <begin position="376"/>
        <end position="380"/>
    </location>
</feature>
<feature type="strand" evidence="38">
    <location>
        <begin position="382"/>
        <end position="384"/>
    </location>
</feature>
<feature type="strand" evidence="41">
    <location>
        <begin position="386"/>
        <end position="390"/>
    </location>
</feature>
<feature type="strand" evidence="41">
    <location>
        <begin position="393"/>
        <end position="395"/>
    </location>
</feature>
<feature type="helix" evidence="41">
    <location>
        <begin position="396"/>
        <end position="398"/>
    </location>
</feature>
<feature type="strand" evidence="41">
    <location>
        <begin position="400"/>
        <end position="404"/>
    </location>
</feature>
<feature type="strand" evidence="41">
    <location>
        <begin position="413"/>
        <end position="418"/>
    </location>
</feature>
<feature type="strand" evidence="41">
    <location>
        <begin position="422"/>
        <end position="429"/>
    </location>
</feature>
<feature type="strand" evidence="41">
    <location>
        <begin position="432"/>
        <end position="438"/>
    </location>
</feature>
<comment type="function">
    <text evidence="4 8 9 10 11 13 16 18 23 25">Polycomb group (PcG) protein. Component of the PRC2/EED-EZH2 complex, which methylates 'Lys-9' and 'Lys-27' of histone H3, leading to transcriptional repression of the affected target gene. Also recognizes 'Lys-26' trimethylated histone H1 with the effect of inhibiting PRC2 complex methyltransferase activity on nucleosomal histone H3 'Lys-27', whereas H3 'Lys-27' recognition has the opposite effect, enabling the propagation of this repressive mark. The PRC2/EED-EZH2 complex may also serve as a recruiting platform for DNA methyltransferases, thereby linking two epigenetic repression systems. Genes repressed by the PRC2/EED-EZH2 complex include HOXC8, HOXA9, MYT1 and CDKN2A.</text>
</comment>
<comment type="subunit">
    <text evidence="2 4 5 6 7 11 13 14 15 16 17 18 19 25 26">Component of the PRC2/EED-EZH2 complex, which includes EED, EZH2, SUZ12, RBBP4 and RBBP7 and possibly AEBP2. The minimum components required for methyltransferase activity of the PRC2/EED-EZH2 complex are EED, EZH2 and SUZ12. Component of the PRC2/EED-EZH1 complex, which includes EED, EZH1, SUZ12, RBBP4 and AEBP2. The PRC2 complex may also interact with DNMT1, DNMT3A, DNMT3B and PHF1 via the EZH2 subunit and with SIRT1 via the SUZ12 subunit. Interacts with HDAC, HDAC2, histone H1 and YY1. May interact with ITGA4, ITGAE and ITGB7. Interacts with CDYL. Interacts with BMAL1. Interacts with KMT2A/MLL1 (By similarity).</text>
</comment>
<comment type="subunit">
    <text evidence="28">(Microbial infection) May interact with the MA protein of HIV-1.</text>
</comment>
<comment type="interaction">
    <interactant intactId="EBI-923794">
        <id>O75530</id>
    </interactant>
    <interactant intactId="EBI-1646500">
        <id>Q8IXJ9</id>
        <label>ASXL1</label>
    </interactant>
    <organismsDiffer>false</organismsDiffer>
    <experiments>5</experiments>
</comment>
<comment type="interaction">
    <interactant intactId="EBI-923794">
        <id>O75530</id>
    </interactant>
    <interactant intactId="EBI-356673">
        <id>P49368</id>
        <label>CCT3</label>
    </interactant>
    <organismsDiffer>false</organismsDiffer>
    <experiments>2</experiments>
</comment>
<comment type="interaction">
    <interactant intactId="EBI-923794">
        <id>O75530</id>
    </interactant>
    <interactant intactId="EBI-350322">
        <id>Q16531</id>
        <label>DDB1</label>
    </interactant>
    <organismsDiffer>false</organismsDiffer>
    <experiments>4</experiments>
</comment>
<comment type="interaction">
    <interactant intactId="EBI-923794">
        <id>O75530</id>
    </interactant>
    <interactant intactId="EBI-719459">
        <id>P26358</id>
        <label>DNMT1</label>
    </interactant>
    <organismsDiffer>false</organismsDiffer>
    <experiments>3</experiments>
</comment>
<comment type="interaction">
    <interactant intactId="EBI-923794">
        <id>O75530</id>
    </interactant>
    <interactant intactId="EBI-923653">
        <id>Q9Y6K1</id>
        <label>DNMT3A</label>
    </interactant>
    <organismsDiffer>false</organismsDiffer>
    <experiments>2</experiments>
</comment>
<comment type="interaction">
    <interactant intactId="EBI-923794">
        <id>O75530</id>
    </interactant>
    <interactant intactId="EBI-80125">
        <id>Q9UBC3</id>
        <label>DNMT3B</label>
    </interactant>
    <organismsDiffer>false</organismsDiffer>
    <experiments>4</experiments>
</comment>
<comment type="interaction">
    <interactant intactId="EBI-923794">
        <id>O75530</id>
    </interactant>
    <interactant intactId="EBI-923794">
        <id>O75530</id>
        <label>EED</label>
    </interactant>
    <organismsDiffer>false</organismsDiffer>
    <experiments>2</experiments>
</comment>
<comment type="interaction">
    <interactant intactId="EBI-923794">
        <id>O75530</id>
    </interactant>
    <interactant intactId="EBI-8830732">
        <id>Q92800</id>
        <label>EZH1</label>
    </interactant>
    <organismsDiffer>false</organismsDiffer>
    <experiments>5</experiments>
</comment>
<comment type="interaction">
    <interactant intactId="EBI-923794">
        <id>O75530</id>
    </interactant>
    <interactant intactId="EBI-530054">
        <id>Q15910</id>
        <label>EZH2</label>
    </interactant>
    <organismsDiffer>false</organismsDiffer>
    <experiments>17</experiments>
</comment>
<comment type="interaction">
    <interactant intactId="EBI-923794">
        <id>O75530</id>
    </interactant>
    <interactant intactId="EBI-15825247">
        <id>Q92833-1</id>
        <label>JARID2</label>
    </interactant>
    <organismsDiffer>false</organismsDiffer>
    <experiments>4</experiments>
</comment>
<comment type="interaction">
    <interactant intactId="EBI-923794">
        <id>O75530</id>
    </interactant>
    <interactant intactId="EBI-867256">
        <id>Q15156</id>
        <label>PML-RAR</label>
    </interactant>
    <organismsDiffer>false</organismsDiffer>
    <experiments>2</experiments>
</comment>
<comment type="interaction">
    <interactant intactId="EBI-923794">
        <id>O75530</id>
    </interactant>
    <interactant intactId="EBI-296739">
        <id>P63244</id>
        <label>RACK1</label>
    </interactant>
    <organismsDiffer>false</organismsDiffer>
    <experiments>3</experiments>
</comment>
<comment type="interaction">
    <interactant intactId="EBI-923794">
        <id>O75530</id>
    </interactant>
    <interactant intactId="EBI-715400">
        <id>Q9NY59</id>
        <label>SMPD3</label>
    </interactant>
    <organismsDiffer>false</organismsDiffer>
    <experiments>2</experiments>
</comment>
<comment type="interaction">
    <interactant intactId="EBI-923794">
        <id>O75530</id>
    </interactant>
    <interactant intactId="EBI-1264675">
        <id>Q15022</id>
        <label>SUZ12</label>
    </interactant>
    <organismsDiffer>false</organismsDiffer>
    <experiments>12</experiments>
</comment>
<comment type="interaction">
    <interactant intactId="EBI-923794">
        <id>O75530</id>
    </interactant>
    <interactant intactId="EBI-9817007">
        <id>Q9JJY3</id>
        <label>Smpd3</label>
    </interactant>
    <organismsDiffer>true</organismsDiffer>
    <experiments>5</experiments>
</comment>
<comment type="interaction">
    <interactant intactId="EBI-11132357">
        <id>O75530-2</id>
    </interactant>
    <interactant intactId="EBI-10976677">
        <id>G5E9A7</id>
        <label>DMWD</label>
    </interactant>
    <organismsDiffer>false</organismsDiffer>
    <experiments>3</experiments>
</comment>
<comment type="interaction">
    <interactant intactId="EBI-11132357">
        <id>O75530-2</id>
    </interactant>
    <interactant intactId="EBI-12322467">
        <id>Q92800-2</id>
        <label>EZH1</label>
    </interactant>
    <organismsDiffer>false</organismsDiffer>
    <experiments>3</experiments>
</comment>
<comment type="interaction">
    <interactant intactId="EBI-11132357">
        <id>O75530-2</id>
    </interactant>
    <interactant intactId="EBI-10699473">
        <id>Q15910-2</id>
        <label>EZH2</label>
    </interactant>
    <organismsDiffer>false</organismsDiffer>
    <experiments>3</experiments>
</comment>
<comment type="interaction">
    <interactant intactId="EBI-11132357">
        <id>O75530-2</id>
    </interactant>
    <interactant intactId="EBI-747754">
        <id>P28799</id>
        <label>GRN</label>
    </interactant>
    <organismsDiffer>false</organismsDiffer>
    <experiments>3</experiments>
</comment>
<comment type="interaction">
    <interactant intactId="EBI-11132357">
        <id>O75530-2</id>
    </interactant>
    <interactant intactId="EBI-1055254">
        <id>Q8WXH2</id>
        <label>JPH3</label>
    </interactant>
    <organismsDiffer>false</organismsDiffer>
    <experiments>3</experiments>
</comment>
<comment type="interaction">
    <interactant intactId="EBI-11132357">
        <id>O75530-2</id>
    </interactant>
    <interactant intactId="EBI-10975473">
        <id>O60333-2</id>
        <label>KIF1B</label>
    </interactant>
    <organismsDiffer>false</organismsDiffer>
    <experiments>3</experiments>
</comment>
<comment type="interaction">
    <interactant intactId="EBI-11132357">
        <id>O75530-2</id>
    </interactant>
    <interactant intactId="EBI-1014472">
        <id>P35240</id>
        <label>NF2</label>
    </interactant>
    <organismsDiffer>false</organismsDiffer>
    <experiments>3</experiments>
</comment>
<comment type="interaction">
    <interactant intactId="EBI-11132357">
        <id>O75530-2</id>
    </interactant>
    <interactant intactId="EBI-21251460">
        <id>O60260-5</id>
        <label>PRKN</label>
    </interactant>
    <organismsDiffer>false</organismsDiffer>
    <experiments>3</experiments>
</comment>
<comment type="interaction">
    <interactant intactId="EBI-11132357">
        <id>O75530-2</id>
    </interactant>
    <interactant intactId="EBI-396669">
        <id>Q9Y3C5</id>
        <label>RNF11</label>
    </interactant>
    <organismsDiffer>false</organismsDiffer>
    <experiments>3</experiments>
</comment>
<comment type="interaction">
    <interactant intactId="EBI-11132357">
        <id>O75530-2</id>
    </interactant>
    <interactant intactId="EBI-985879">
        <id>P37840</id>
        <label>SNCA</label>
    </interactant>
    <organismsDiffer>false</organismsDiffer>
    <experiments>3</experiments>
</comment>
<comment type="interaction">
    <interactant intactId="EBI-11132357">
        <id>O75530-2</id>
    </interactant>
    <interactant intactId="EBI-5235340">
        <id>Q7Z699</id>
        <label>SPRED1</label>
    </interactant>
    <organismsDiffer>false</organismsDiffer>
    <experiments>3</experiments>
</comment>
<comment type="interaction">
    <interactant intactId="EBI-11132357">
        <id>O75530-2</id>
    </interactant>
    <interactant intactId="EBI-372899">
        <id>Q13148</id>
        <label>TARDBP</label>
    </interactant>
    <organismsDiffer>false</organismsDiffer>
    <experiments>3</experiments>
</comment>
<comment type="interaction">
    <interactant intactId="EBI-11132357">
        <id>O75530-2</id>
    </interactant>
    <interactant intactId="EBI-12157263">
        <id>P40337-2</id>
        <label>VHL</label>
    </interactant>
    <organismsDiffer>false</organismsDiffer>
    <experiments>3</experiments>
</comment>
<comment type="subcellular location">
    <subcellularLocation>
        <location>Nucleus</location>
    </subcellularLocation>
    <subcellularLocation>
        <location>Chromosome</location>
    </subcellularLocation>
    <text>Transiently colocalizes with XIST at inactive X chromosomes.</text>
</comment>
<comment type="alternative products">
    <event type="alternative splicing"/>
    <event type="alternative initiation"/>
    <isoform>
        <id>O75530-1</id>
        <name>1</name>
        <sequence type="displayed"/>
    </isoform>
    <isoform>
        <id>O75530-2</id>
        <name>2</name>
        <sequence type="described" ref="VSP_034691"/>
    </isoform>
    <isoform>
        <id>O75530-3</id>
        <name>3</name>
        <sequence type="described" ref="VSP_034692"/>
    </isoform>
    <text>Additional isoforms may be produced by alternative initiation, both from non-canonical start codons upstream of the initiator methionine displayed and from other canonical start codons downstream of that displayed (PubMed:15099518, PubMed:15684044). The precise sites of translation initiation have not been unambiguously identified.</text>
</comment>
<comment type="tissue specificity">
    <text evidence="12 25 26 27 28">Expressed in brain, colon, heart, kidney, liver, lung, muscle, ovary, peripheral blood leukocytes, pancreas, placenta, prostate, spleen, small intestine, testis, thymus and uterus. Appears to be overexpressed in breast and colon cancer.</text>
</comment>
<comment type="developmental stage">
    <text evidence="8">Expression peaks at the G1/S phase boundary.</text>
</comment>
<comment type="induction">
    <text evidence="8">Expression is induced by E2F1, E2F2 and E2F3.</text>
</comment>
<comment type="domain">
    <text evidence="18">The WD repeat domain mediates recognition of trimethylated histone peptides at the consensus sequence Ala-Arg-Lys-Ser. This is achieved through an aromatic cage encircling the methyllysine, and involving Phe-97, Tyr-148 and Tyr-365.</text>
</comment>
<comment type="PTM">
    <text evidence="18">Methylated. Binding to histone H1 'Lys-26' promotes mono-, di-, and trimethylation of internal lysines.</text>
</comment>
<comment type="disease" evidence="20 21 22 23 24">
    <disease id="DI-05034">
        <name>Cohen-Gibson syndrome</name>
        <acronym>COGIS</acronym>
        <description>An autosomal dominant overgrowth disorder characterized by accelerated osseous maturation, advanced bone age, skeletal abnormalities including flaring of the metaphyses of the long bones, large hands with long fingers and camptodactyly, scoliosis, cervical spine anomalies, dysmorphic facial features, and variable intellectual disability.</description>
        <dbReference type="MIM" id="617561"/>
    </disease>
    <text>The disease is caused by variants affecting the gene represented in this entry.</text>
</comment>
<comment type="similarity">
    <text evidence="32">Belongs to the WD repeat ESC family.</text>
</comment>
<comment type="caution">
    <text evidence="33">Two variants of the PRC2 complex have been described, termed PRC3 and PRC4. Each of the three complexes may include a different complement of EED isoforms, although the precise sequences of the isoforms in each complex have not been determined. The PRC2 and PRC4 complexes may also methylate 'Lys-26' of histone H1 in addition to 'Lys-27' of histone H3 (PubMed:15099518, PubMed:15684044), although other studies have demonstrated no methylation of 'Lys-26' of histone H1 by PRC2 (PubMed:16431907).</text>
</comment>
<comment type="sequence caution" evidence="32">
    <conflict type="erroneous initiation">
        <sequence resource="EMBL-CDS" id="AAC23685"/>
    </conflict>
    <text>Extended N-terminus.</text>
</comment>
<comment type="sequence caution" evidence="32">
    <conflict type="erroneous initiation">
        <sequence resource="EMBL-CDS" id="AAC68675"/>
    </conflict>
    <text>Truncated N-terminus.</text>
</comment>
<name>EED_HUMAN</name>
<evidence type="ECO:0000250" key="1"/>
<evidence type="ECO:0000250" key="2">
    <source>
        <dbReference type="UniProtKB" id="Q921E6"/>
    </source>
</evidence>
<evidence type="ECO:0000256" key="3">
    <source>
        <dbReference type="SAM" id="MobiDB-lite"/>
    </source>
</evidence>
<evidence type="ECO:0000269" key="4">
    <source>
    </source>
</evidence>
<evidence type="ECO:0000269" key="5">
    <source>
    </source>
</evidence>
<evidence type="ECO:0000269" key="6">
    <source>
    </source>
</evidence>
<evidence type="ECO:0000269" key="7">
    <source>
    </source>
</evidence>
<evidence type="ECO:0000269" key="8">
    <source>
    </source>
</evidence>
<evidence type="ECO:0000269" key="9">
    <source>
    </source>
</evidence>
<evidence type="ECO:0000269" key="10">
    <source>
    </source>
</evidence>
<evidence type="ECO:0000269" key="11">
    <source>
    </source>
</evidence>
<evidence type="ECO:0000269" key="12">
    <source>
    </source>
</evidence>
<evidence type="ECO:0000269" key="13">
    <source>
    </source>
</evidence>
<evidence type="ECO:0000269" key="14">
    <source>
    </source>
</evidence>
<evidence type="ECO:0000269" key="15">
    <source>
    </source>
</evidence>
<evidence type="ECO:0000269" key="16">
    <source>
    </source>
</evidence>
<evidence type="ECO:0000269" key="17">
    <source>
    </source>
</evidence>
<evidence type="ECO:0000269" key="18">
    <source>
    </source>
</evidence>
<evidence type="ECO:0000269" key="19">
    <source>
    </source>
</evidence>
<evidence type="ECO:0000269" key="20">
    <source>
    </source>
</evidence>
<evidence type="ECO:0000269" key="21">
    <source>
    </source>
</evidence>
<evidence type="ECO:0000269" key="22">
    <source>
    </source>
</evidence>
<evidence type="ECO:0000269" key="23">
    <source>
    </source>
</evidence>
<evidence type="ECO:0000269" key="24">
    <source>
    </source>
</evidence>
<evidence type="ECO:0000269" key="25">
    <source>
    </source>
</evidence>
<evidence type="ECO:0000269" key="26">
    <source>
    </source>
</evidence>
<evidence type="ECO:0000269" key="27">
    <source>
    </source>
</evidence>
<evidence type="ECO:0000269" key="28">
    <source>
    </source>
</evidence>
<evidence type="ECO:0000303" key="29">
    <source>
    </source>
</evidence>
<evidence type="ECO:0000303" key="30">
    <source>
    </source>
</evidence>
<evidence type="ECO:0000303" key="31">
    <source>
    </source>
</evidence>
<evidence type="ECO:0000305" key="32"/>
<evidence type="ECO:0000305" key="33">
    <source>
    </source>
</evidence>
<evidence type="ECO:0000312" key="34">
    <source>
        <dbReference type="HGNC" id="HGNC:3188"/>
    </source>
</evidence>
<evidence type="ECO:0007744" key="35">
    <source>
    </source>
</evidence>
<evidence type="ECO:0007744" key="36">
    <source>
    </source>
</evidence>
<evidence type="ECO:0007744" key="37">
    <source>
    </source>
</evidence>
<evidence type="ECO:0007829" key="38">
    <source>
        <dbReference type="PDB" id="4W2R"/>
    </source>
</evidence>
<evidence type="ECO:0007829" key="39">
    <source>
        <dbReference type="PDB" id="5H17"/>
    </source>
</evidence>
<evidence type="ECO:0007829" key="40">
    <source>
        <dbReference type="PDB" id="5U5K"/>
    </source>
</evidence>
<evidence type="ECO:0007829" key="41">
    <source>
        <dbReference type="PDB" id="5U69"/>
    </source>
</evidence>
<evidence type="ECO:0007829" key="42">
    <source>
        <dbReference type="PDB" id="6C24"/>
    </source>
</evidence>
<evidence type="ECO:0007829" key="43">
    <source>
        <dbReference type="PDB" id="6SFB"/>
    </source>
</evidence>
<evidence type="ECO:0007829" key="44">
    <source>
        <dbReference type="PDB" id="6V3X"/>
    </source>
</evidence>
<evidence type="ECO:0007829" key="45">
    <source>
        <dbReference type="PDB" id="7QJU"/>
    </source>
</evidence>
<evidence type="ECO:0007829" key="46">
    <source>
        <dbReference type="PDB" id="8FYH"/>
    </source>
</evidence>
<organism>
    <name type="scientific">Homo sapiens</name>
    <name type="common">Human</name>
    <dbReference type="NCBI Taxonomy" id="9606"/>
    <lineage>
        <taxon>Eukaryota</taxon>
        <taxon>Metazoa</taxon>
        <taxon>Chordata</taxon>
        <taxon>Craniata</taxon>
        <taxon>Vertebrata</taxon>
        <taxon>Euteleostomi</taxon>
        <taxon>Mammalia</taxon>
        <taxon>Eutheria</taxon>
        <taxon>Euarchontoglires</taxon>
        <taxon>Primates</taxon>
        <taxon>Haplorrhini</taxon>
        <taxon>Catarrhini</taxon>
        <taxon>Hominidae</taxon>
        <taxon>Homo</taxon>
    </lineage>
</organism>